<feature type="chain" id="PRO_0000124879" description="Histone-lysine N-methyltransferase 2C">
    <location>
        <begin position="1"/>
        <end position="4911"/>
    </location>
</feature>
<feature type="domain" description="DHHC" evidence="4">
    <location>
        <begin position="436"/>
        <end position="489"/>
    </location>
</feature>
<feature type="domain" description="FYR N-terminal" evidence="9">
    <location>
        <begin position="4545"/>
        <end position="4605"/>
    </location>
</feature>
<feature type="domain" description="FYR C-terminal" evidence="10">
    <location>
        <begin position="4606"/>
        <end position="4691"/>
    </location>
</feature>
<feature type="domain" description="SET" evidence="8">
    <location>
        <begin position="4771"/>
        <end position="4887"/>
    </location>
</feature>
<feature type="domain" description="Post-SET" evidence="6">
    <location>
        <begin position="4895"/>
        <end position="4911"/>
    </location>
</feature>
<feature type="DNA-binding region" description="A.T hook">
    <location>
        <begin position="34"/>
        <end position="46"/>
    </location>
</feature>
<feature type="zinc finger region" description="C2HC pre-PHD-type 1; degenerate" evidence="11">
    <location>
        <begin position="227"/>
        <end position="262"/>
    </location>
</feature>
<feature type="zinc finger region" description="PHD-type 1" evidence="11">
    <location>
        <begin position="283"/>
        <end position="331"/>
    </location>
</feature>
<feature type="zinc finger region" description="PHD-type 2" evidence="5">
    <location>
        <begin position="341"/>
        <end position="391"/>
    </location>
</feature>
<feature type="zinc finger region" description="RING-type" evidence="7">
    <location>
        <begin position="344"/>
        <end position="389"/>
    </location>
</feature>
<feature type="zinc finger region" description="PHD-type 3" evidence="5">
    <location>
        <begin position="388"/>
        <end position="438"/>
    </location>
</feature>
<feature type="zinc finger region" description="PHD-type 4" evidence="5">
    <location>
        <begin position="464"/>
        <end position="520"/>
    </location>
</feature>
<feature type="zinc finger region" description="PHD-type 5" evidence="5">
    <location>
        <begin position="957"/>
        <end position="1010"/>
    </location>
</feature>
<feature type="zinc finger region" description="PHD-type 6" evidence="5">
    <location>
        <begin position="1007"/>
        <end position="1057"/>
    </location>
</feature>
<feature type="zinc finger region" description="PHD-type 7" evidence="5">
    <location>
        <begin position="1084"/>
        <end position="1139"/>
    </location>
</feature>
<feature type="zinc finger region" description="C2HC pre-PHD-type 2" evidence="11">
    <location>
        <begin position="4399"/>
        <end position="4439"/>
    </location>
</feature>
<feature type="zinc finger region" description="PHD-type 8" evidence="11">
    <location>
        <begin position="4460"/>
        <end position="4507"/>
    </location>
</feature>
<feature type="region of interest" description="Disordered" evidence="12">
    <location>
        <begin position="1"/>
        <end position="101"/>
    </location>
</feature>
<feature type="region of interest" description="Disordered" evidence="12">
    <location>
        <begin position="164"/>
        <end position="203"/>
    </location>
</feature>
<feature type="region of interest" description="Disordered" evidence="12">
    <location>
        <begin position="721"/>
        <end position="742"/>
    </location>
</feature>
<feature type="region of interest" description="Disordered" evidence="12">
    <location>
        <begin position="763"/>
        <end position="798"/>
    </location>
</feature>
<feature type="region of interest" description="Disordered" evidence="12">
    <location>
        <begin position="828"/>
        <end position="864"/>
    </location>
</feature>
<feature type="region of interest" description="Disordered" evidence="12">
    <location>
        <begin position="885"/>
        <end position="912"/>
    </location>
</feature>
<feature type="region of interest" description="Disordered" evidence="12">
    <location>
        <begin position="1215"/>
        <end position="1324"/>
    </location>
</feature>
<feature type="region of interest" description="Disordered" evidence="12">
    <location>
        <begin position="1406"/>
        <end position="1431"/>
    </location>
</feature>
<feature type="region of interest" description="Disordered" evidence="12">
    <location>
        <begin position="1458"/>
        <end position="1485"/>
    </location>
</feature>
<feature type="region of interest" description="Disordered" evidence="12">
    <location>
        <begin position="1604"/>
        <end position="1630"/>
    </location>
</feature>
<feature type="region of interest" description="Disordered" evidence="12">
    <location>
        <begin position="1709"/>
        <end position="2448"/>
    </location>
</feature>
<feature type="region of interest" description="Disordered" evidence="12">
    <location>
        <begin position="2589"/>
        <end position="2694"/>
    </location>
</feature>
<feature type="region of interest" description="Disordered" evidence="12">
    <location>
        <begin position="2793"/>
        <end position="2887"/>
    </location>
</feature>
<feature type="region of interest" description="Disordered" evidence="12">
    <location>
        <begin position="2925"/>
        <end position="2954"/>
    </location>
</feature>
<feature type="region of interest" description="Disordered" evidence="12">
    <location>
        <begin position="2989"/>
        <end position="3029"/>
    </location>
</feature>
<feature type="region of interest" description="Disordered" evidence="12">
    <location>
        <begin position="3205"/>
        <end position="3241"/>
    </location>
</feature>
<feature type="region of interest" description="Disordered" evidence="12">
    <location>
        <begin position="3353"/>
        <end position="3409"/>
    </location>
</feature>
<feature type="region of interest" description="Disordered" evidence="12">
    <location>
        <begin position="3527"/>
        <end position="3583"/>
    </location>
</feature>
<feature type="region of interest" description="Disordered" evidence="12">
    <location>
        <begin position="3596"/>
        <end position="3919"/>
    </location>
</feature>
<feature type="region of interest" description="Disordered" evidence="12">
    <location>
        <begin position="4024"/>
        <end position="4053"/>
    </location>
</feature>
<feature type="coiled-coil region" evidence="3">
    <location>
        <begin position="92"/>
        <end position="112"/>
    </location>
</feature>
<feature type="coiled-coil region" evidence="3">
    <location>
        <begin position="644"/>
        <end position="672"/>
    </location>
</feature>
<feature type="coiled-coil region" evidence="3">
    <location>
        <begin position="1338"/>
        <end position="1366"/>
    </location>
</feature>
<feature type="coiled-coil region" evidence="3">
    <location>
        <begin position="1754"/>
        <end position="1787"/>
    </location>
</feature>
<feature type="coiled-coil region" evidence="3">
    <location>
        <begin position="3054"/>
        <end position="3081"/>
    </location>
</feature>
<feature type="coiled-coil region" evidence="3">
    <location>
        <begin position="3173"/>
        <end position="3272"/>
    </location>
</feature>
<feature type="coiled-coil region" evidence="3">
    <location>
        <begin position="3391"/>
        <end position="3433"/>
    </location>
</feature>
<feature type="short sequence motif" description="WDR5 interaction motif (WIN)" evidence="17 18">
    <location>
        <begin position="4707"/>
        <end position="4712"/>
    </location>
</feature>
<feature type="compositionally biased region" description="Pro residues" evidence="12">
    <location>
        <begin position="12"/>
        <end position="28"/>
    </location>
</feature>
<feature type="compositionally biased region" description="Basic residues" evidence="12">
    <location>
        <begin position="50"/>
        <end position="59"/>
    </location>
</feature>
<feature type="compositionally biased region" description="Acidic residues" evidence="12">
    <location>
        <begin position="64"/>
        <end position="81"/>
    </location>
</feature>
<feature type="compositionally biased region" description="Polar residues" evidence="12">
    <location>
        <begin position="176"/>
        <end position="189"/>
    </location>
</feature>
<feature type="compositionally biased region" description="Basic and acidic residues" evidence="12">
    <location>
        <begin position="721"/>
        <end position="730"/>
    </location>
</feature>
<feature type="compositionally biased region" description="Low complexity" evidence="12">
    <location>
        <begin position="763"/>
        <end position="791"/>
    </location>
</feature>
<feature type="compositionally biased region" description="Basic residues" evidence="12">
    <location>
        <begin position="830"/>
        <end position="842"/>
    </location>
</feature>
<feature type="compositionally biased region" description="Polar residues" evidence="12">
    <location>
        <begin position="845"/>
        <end position="856"/>
    </location>
</feature>
<feature type="compositionally biased region" description="Basic and acidic residues" evidence="12">
    <location>
        <begin position="1224"/>
        <end position="1270"/>
    </location>
</feature>
<feature type="compositionally biased region" description="Low complexity" evidence="12">
    <location>
        <begin position="1406"/>
        <end position="1416"/>
    </location>
</feature>
<feature type="compositionally biased region" description="Polar residues" evidence="12">
    <location>
        <begin position="1467"/>
        <end position="1482"/>
    </location>
</feature>
<feature type="compositionally biased region" description="Polar residues" evidence="12">
    <location>
        <begin position="1610"/>
        <end position="1620"/>
    </location>
</feature>
<feature type="compositionally biased region" description="Polar residues" evidence="12">
    <location>
        <begin position="1709"/>
        <end position="1727"/>
    </location>
</feature>
<feature type="compositionally biased region" description="Basic and acidic residues" evidence="12">
    <location>
        <begin position="1729"/>
        <end position="1753"/>
    </location>
</feature>
<feature type="compositionally biased region" description="Polar residues" evidence="12">
    <location>
        <begin position="1788"/>
        <end position="1823"/>
    </location>
</feature>
<feature type="compositionally biased region" description="Pro residues" evidence="12">
    <location>
        <begin position="1851"/>
        <end position="1860"/>
    </location>
</feature>
<feature type="compositionally biased region" description="Low complexity" evidence="12">
    <location>
        <begin position="1861"/>
        <end position="1875"/>
    </location>
</feature>
<feature type="compositionally biased region" description="Polar residues" evidence="12">
    <location>
        <begin position="1927"/>
        <end position="1945"/>
    </location>
</feature>
<feature type="compositionally biased region" description="Polar residues" evidence="12">
    <location>
        <begin position="2054"/>
        <end position="2065"/>
    </location>
</feature>
<feature type="compositionally biased region" description="Polar residues" evidence="12">
    <location>
        <begin position="2085"/>
        <end position="2094"/>
    </location>
</feature>
<feature type="compositionally biased region" description="Polar residues" evidence="12">
    <location>
        <begin position="2115"/>
        <end position="2131"/>
    </location>
</feature>
<feature type="compositionally biased region" description="Polar residues" evidence="12">
    <location>
        <begin position="2144"/>
        <end position="2159"/>
    </location>
</feature>
<feature type="compositionally biased region" description="Low complexity" evidence="12">
    <location>
        <begin position="2173"/>
        <end position="2187"/>
    </location>
</feature>
<feature type="compositionally biased region" description="Polar residues" evidence="12">
    <location>
        <begin position="2302"/>
        <end position="2319"/>
    </location>
</feature>
<feature type="compositionally biased region" description="Polar residues" evidence="12">
    <location>
        <begin position="2335"/>
        <end position="2353"/>
    </location>
</feature>
<feature type="compositionally biased region" description="Polar residues" evidence="12">
    <location>
        <begin position="2362"/>
        <end position="2375"/>
    </location>
</feature>
<feature type="compositionally biased region" description="Basic and acidic residues" evidence="12">
    <location>
        <begin position="2377"/>
        <end position="2389"/>
    </location>
</feature>
<feature type="compositionally biased region" description="Low complexity" evidence="12">
    <location>
        <begin position="2390"/>
        <end position="2399"/>
    </location>
</feature>
<feature type="compositionally biased region" description="Polar residues" evidence="12">
    <location>
        <begin position="2629"/>
        <end position="2645"/>
    </location>
</feature>
<feature type="compositionally biased region" description="Polar residues" evidence="12">
    <location>
        <begin position="2661"/>
        <end position="2682"/>
    </location>
</feature>
<feature type="compositionally biased region" description="Basic and acidic residues" evidence="12">
    <location>
        <begin position="2793"/>
        <end position="2811"/>
    </location>
</feature>
<feature type="compositionally biased region" description="Polar residues" evidence="12">
    <location>
        <begin position="2814"/>
        <end position="2832"/>
    </location>
</feature>
<feature type="compositionally biased region" description="Basic and acidic residues" evidence="12">
    <location>
        <begin position="2833"/>
        <end position="2849"/>
    </location>
</feature>
<feature type="compositionally biased region" description="Polar residues" evidence="12">
    <location>
        <begin position="2851"/>
        <end position="2860"/>
    </location>
</feature>
<feature type="compositionally biased region" description="Basic and acidic residues" evidence="12">
    <location>
        <begin position="2861"/>
        <end position="2884"/>
    </location>
</feature>
<feature type="compositionally biased region" description="Low complexity" evidence="12">
    <location>
        <begin position="3011"/>
        <end position="3029"/>
    </location>
</feature>
<feature type="compositionally biased region" description="Basic residues" evidence="12">
    <location>
        <begin position="3205"/>
        <end position="3221"/>
    </location>
</feature>
<feature type="compositionally biased region" description="Basic and acidic residues" evidence="12">
    <location>
        <begin position="3222"/>
        <end position="3238"/>
    </location>
</feature>
<feature type="compositionally biased region" description="Basic and acidic residues" evidence="12">
    <location>
        <begin position="3395"/>
        <end position="3409"/>
    </location>
</feature>
<feature type="compositionally biased region" description="Polar residues" evidence="12">
    <location>
        <begin position="3527"/>
        <end position="3549"/>
    </location>
</feature>
<feature type="compositionally biased region" description="Polar residues" evidence="12">
    <location>
        <begin position="3564"/>
        <end position="3583"/>
    </location>
</feature>
<feature type="compositionally biased region" description="Polar residues" evidence="12">
    <location>
        <begin position="3637"/>
        <end position="3658"/>
    </location>
</feature>
<feature type="compositionally biased region" description="Polar residues" evidence="12">
    <location>
        <begin position="3684"/>
        <end position="3701"/>
    </location>
</feature>
<feature type="compositionally biased region" description="Basic and acidic residues" evidence="12">
    <location>
        <begin position="3703"/>
        <end position="3725"/>
    </location>
</feature>
<feature type="compositionally biased region" description="Basic and acidic residues" evidence="12">
    <location>
        <begin position="3803"/>
        <end position="3812"/>
    </location>
</feature>
<feature type="compositionally biased region" description="Polar residues" evidence="12">
    <location>
        <begin position="3878"/>
        <end position="3892"/>
    </location>
</feature>
<feature type="compositionally biased region" description="Pro residues" evidence="12">
    <location>
        <begin position="3897"/>
        <end position="3911"/>
    </location>
</feature>
<feature type="binding site" evidence="8">
    <location>
        <position position="4825"/>
    </location>
    <ligand>
        <name>S-adenosyl-L-methionine</name>
        <dbReference type="ChEBI" id="CHEBI:59789"/>
    </ligand>
</feature>
<feature type="binding site" evidence="1">
    <location>
        <begin position="4848"/>
        <end position="4849"/>
    </location>
    <ligand>
        <name>S-adenosyl-L-methionine</name>
        <dbReference type="ChEBI" id="CHEBI:59789"/>
    </ligand>
</feature>
<feature type="binding site" evidence="1">
    <location>
        <position position="4851"/>
    </location>
    <ligand>
        <name>Zn(2+)</name>
        <dbReference type="ChEBI" id="CHEBI:29105"/>
    </ligand>
</feature>
<feature type="binding site" evidence="1">
    <location>
        <position position="4899"/>
    </location>
    <ligand>
        <name>Zn(2+)</name>
        <dbReference type="ChEBI" id="CHEBI:29105"/>
    </ligand>
</feature>
<feature type="binding site" evidence="1">
    <location>
        <position position="4901"/>
    </location>
    <ligand>
        <name>Zn(2+)</name>
        <dbReference type="ChEBI" id="CHEBI:29105"/>
    </ligand>
</feature>
<feature type="binding site" evidence="1">
    <location>
        <position position="4906"/>
    </location>
    <ligand>
        <name>Zn(2+)</name>
        <dbReference type="ChEBI" id="CHEBI:29105"/>
    </ligand>
</feature>
<feature type="modified residue" description="Phosphoserine" evidence="33">
    <location>
        <position position="28"/>
    </location>
</feature>
<feature type="modified residue" description="Phosphoserine" evidence="31">
    <location>
        <position position="46"/>
    </location>
</feature>
<feature type="modified residue" description="Phosphoserine" evidence="32">
    <location>
        <position position="89"/>
    </location>
</feature>
<feature type="modified residue" description="Phosphoserine" evidence="33">
    <location>
        <position position="113"/>
    </location>
</feature>
<feature type="modified residue" description="Phosphoserine" evidence="34">
    <location>
        <position position="200"/>
    </location>
</feature>
<feature type="modified residue" description="N6-acetyllysine" evidence="30">
    <location>
        <position position="758"/>
    </location>
</feature>
<feature type="modified residue" description="Phosphoserine" evidence="33">
    <location>
        <position position="854"/>
    </location>
</feature>
<feature type="modified residue" description="Phosphoserine" evidence="32">
    <location>
        <position position="1301"/>
    </location>
</feature>
<feature type="modified residue" description="N6-acetyllysine" evidence="30">
    <location>
        <position position="1508"/>
    </location>
</feature>
<feature type="modified residue" description="N6-acetyllysine" evidence="30">
    <location>
        <position position="1772"/>
    </location>
</feature>
<feature type="modified residue" description="Phosphoserine" evidence="33">
    <location>
        <position position="1987"/>
    </location>
</feature>
<feature type="modified residue" description="N6-acetyllysine" evidence="30">
    <location>
        <position position="2009"/>
    </location>
</feature>
<feature type="modified residue" description="Asymmetric dimethylarginine" evidence="2">
    <location>
        <position position="2454"/>
    </location>
</feature>
<feature type="modified residue" description="Asymmetric dimethylarginine" evidence="2">
    <location>
        <position position="2571"/>
    </location>
</feature>
<feature type="modified residue" description="N6-acetyllysine" evidence="30">
    <location>
        <position position="2802"/>
    </location>
</feature>
<feature type="modified residue" description="N6-acetyllysine" evidence="30">
    <location>
        <position position="2809"/>
    </location>
</feature>
<feature type="modified residue" description="Phosphoserine" evidence="33">
    <location>
        <position position="2828"/>
    </location>
</feature>
<feature type="modified residue" description="N6-acetyllysine" evidence="30">
    <location>
        <position position="2832"/>
    </location>
</feature>
<feature type="modified residue" description="N6-acetyllysine" evidence="2">
    <location>
        <position position="2867"/>
    </location>
</feature>
<feature type="modified residue" description="N6-acetyllysine" evidence="30">
    <location>
        <position position="3714"/>
    </location>
</feature>
<feature type="modified residue" description="Phosphoserine" evidence="34">
    <location>
        <position position="3758"/>
    </location>
</feature>
<feature type="modified residue" description="Phosphoserine" evidence="34">
    <location>
        <position position="4034"/>
    </location>
</feature>
<feature type="modified residue" description="Asymmetric dimethylarginine" evidence="2">
    <location>
        <position position="4139"/>
    </location>
</feature>
<feature type="modified residue" description="Phosphoserine" evidence="33 34">
    <location>
        <position position="4267"/>
    </location>
</feature>
<feature type="splice variant" id="VSP_008562" description="In isoform 2 and isoform 3." evidence="24">
    <original>Q</original>
    <variation>QVRQLSLLPLMEPIIGVNFAHFLPYGSGQFNSGNRLLGTFGSATLEGVSDYYSQLIYK</variation>
    <location>
        <position position="3890"/>
    </location>
</feature>
<feature type="splice variant" id="VSP_036223" description="In isoform 2." evidence="24">
    <location>
        <begin position="4721"/>
        <end position="4724"/>
    </location>
</feature>
<feature type="sequence variant" id="VAR_061911" description="In dbSNP:rs56850341.">
    <original>L</original>
    <variation>F</variation>
    <location>
        <position position="291"/>
    </location>
</feature>
<feature type="sequence variant" id="VAR_061912" description="In dbSNP:rs10454320.">
    <original>T</original>
    <variation>S</variation>
    <location>
        <position position="316"/>
    </location>
</feature>
<feature type="sequence variant" id="VAR_036311" description="In a colorectal cancer sample; somatic mutation; dbSNP:rs2129173582." evidence="14">
    <original>C</original>
    <variation>G</variation>
    <location>
        <position position="347"/>
    </location>
</feature>
<feature type="sequence variant" id="VAR_036312" description="In a colorectal cancer sample; somatic mutation." evidence="14">
    <original>D</original>
    <variation>N</variation>
    <location>
        <position position="400"/>
    </location>
</feature>
<feature type="sequence variant" id="VAR_036313" description="In a colorectal cancer sample; somatic mutation." evidence="14">
    <original>L</original>
    <variation>W</variation>
    <location>
        <position position="478"/>
    </location>
</feature>
<feature type="sequence variant" id="VAR_057360" description="In dbSNP:rs3735156." evidence="13">
    <original>R</original>
    <variation>P</variation>
    <location>
        <position position="526"/>
    </location>
</feature>
<feature type="sequence variant" id="VAR_080246" description="In KLEFS2." evidence="23">
    <location>
        <begin position="564"/>
        <end position="4911"/>
    </location>
</feature>
<feature type="sequence variant" id="VAR_017118" description="In dbSNP:rs2838171.">
    <original>I</original>
    <variation>N</variation>
    <location>
        <position position="823"/>
    </location>
</feature>
<feature type="sequence variant" id="VAR_017117" description="In dbSNP:rs2838171.">
    <original>I</original>
    <variation>T</variation>
    <location>
        <position position="823"/>
    </location>
</feature>
<feature type="sequence variant" id="VAR_080247" description="In KLEFS2." evidence="19">
    <location>
        <begin position="1481"/>
        <end position="4911"/>
    </location>
</feature>
<feature type="sequence variant" id="VAR_057361" description="In dbSNP:rs11771635.">
    <original>S</original>
    <variation>N</variation>
    <location>
        <position position="1836"/>
    </location>
</feature>
<feature type="sequence variant" id="VAR_057362" description="In dbSNP:rs6951159.">
    <original>T</original>
    <variation>A</variation>
    <location>
        <position position="2008"/>
    </location>
</feature>
<feature type="sequence variant" id="VAR_057363" description="In dbSNP:rs13231116.">
    <original>P</original>
    <variation>T</variation>
    <location>
        <position position="2412"/>
    </location>
</feature>
<feature type="sequence variant" id="VAR_080248" description="In KLEFS2." evidence="23">
    <location>
        <begin position="2517"/>
        <end position="4911"/>
    </location>
</feature>
<feature type="sequence variant" id="VAR_057364" description="In dbSNP:rs2270234.">
    <original>P</original>
    <variation>A</variation>
    <location>
        <position position="2600"/>
    </location>
</feature>
<feature type="sequence variant" id="VAR_036314" description="In a colorectal cancer sample; somatic mutation." evidence="14">
    <original>T</original>
    <variation>S</variation>
    <location>
        <position position="3698"/>
    </location>
</feature>
<feature type="mutagenesis site" description="Confers a WRAD-dependent gain-of-function histone H3 dimethylation activity. Converts H3K4me1 into H3K4me2." evidence="22">
    <original>R</original>
    <variation>P</variation>
    <location>
        <position position="4779"/>
    </location>
</feature>
<feature type="mutagenesis site" description="Confers a WRAD-dependent gain-of-function histone H3 dimethylation activity. Converts H3K4me1 into H3K4me2." evidence="22">
    <original>Y</original>
    <variation>F</variation>
    <location>
        <position position="4786"/>
    </location>
</feature>
<feature type="mutagenesis site" description="Abolishes interaction with S-adenosyl-L-methionine." evidence="22">
    <original>N</original>
    <variation>A</variation>
    <location>
        <position position="4848"/>
    </location>
</feature>
<feature type="mutagenesis site" description="Confers a WRAD-dependent gain-of-function histone H3 dimethylation activity. Converts H3K4me1 into H3K4me2." evidence="22">
    <original>Q</original>
    <variation>Y</variation>
    <location>
        <position position="4877"/>
    </location>
</feature>
<feature type="mutagenesis site" description="Confers a WRAD-dependent gain-of-function histone H3 dimethylation activity. Converts H3K4me1 into H3K4me2." evidence="22">
    <original>H</original>
    <variation>N</variation>
    <location>
        <position position="4900"/>
    </location>
</feature>
<feature type="sequence conflict" description="In Ref. 1; AAK00583." evidence="25" ref="1">
    <original>A</original>
    <variation>T</variation>
    <location>
        <position position="579"/>
    </location>
</feature>
<feature type="sequence conflict" description="In Ref. 1; AAK00583." evidence="25" ref="1">
    <original>M</original>
    <variation>V</variation>
    <location>
        <position position="1286"/>
    </location>
</feature>
<feature type="sequence conflict" description="In Ref. 1; AAK00583." evidence="25" ref="1">
    <original>P</original>
    <variation>S</variation>
    <location>
        <position position="2360"/>
    </location>
</feature>
<feature type="sequence conflict" description="In Ref. 1; AAK00583." evidence="25" ref="1">
    <original>K</original>
    <variation>R</variation>
    <location>
        <position position="2797"/>
    </location>
</feature>
<feature type="sequence conflict" description="In Ref. 1; AAK00583." evidence="25" ref="1">
    <original>T</original>
    <variation>A</variation>
    <location>
        <position position="2882"/>
    </location>
</feature>
<feature type="sequence conflict" description="In Ref. 6; BAC11409." evidence="25" ref="6">
    <original>P</original>
    <variation>S</variation>
    <location>
        <position position="3289"/>
    </location>
</feature>
<feature type="sequence conflict" description="In Ref. 6; BAC11409." evidence="25" ref="6">
    <original>R</original>
    <variation>W</variation>
    <location>
        <position position="3428"/>
    </location>
</feature>
<feature type="sequence conflict" description="In Ref. 6; AK022687." evidence="25" ref="6">
    <original>I</original>
    <variation>V</variation>
    <location>
        <position position="4613"/>
    </location>
</feature>
<feature type="sequence conflict" description="In Ref. 6; AK022687." evidence="25" ref="6">
    <original>H</original>
    <variation>P</variation>
    <location>
        <position position="4866"/>
    </location>
</feature>
<feature type="turn" evidence="35">
    <location>
        <begin position="345"/>
        <end position="347"/>
    </location>
</feature>
<feature type="turn" evidence="35">
    <location>
        <begin position="353"/>
        <end position="355"/>
    </location>
</feature>
<feature type="strand" evidence="35">
    <location>
        <begin position="356"/>
        <end position="358"/>
    </location>
</feature>
<feature type="strand" evidence="35">
    <location>
        <begin position="360"/>
        <end position="362"/>
    </location>
</feature>
<feature type="turn" evidence="35">
    <location>
        <begin position="368"/>
        <end position="372"/>
    </location>
</feature>
<feature type="turn" evidence="35">
    <location>
        <begin position="377"/>
        <end position="379"/>
    </location>
</feature>
<feature type="turn" evidence="35">
    <location>
        <begin position="386"/>
        <end position="388"/>
    </location>
</feature>
<feature type="turn" evidence="35">
    <location>
        <begin position="392"/>
        <end position="394"/>
    </location>
</feature>
<feature type="strand" evidence="35">
    <location>
        <begin position="403"/>
        <end position="405"/>
    </location>
</feature>
<feature type="strand" evidence="35">
    <location>
        <begin position="407"/>
        <end position="409"/>
    </location>
</feature>
<feature type="strand" evidence="35">
    <location>
        <begin position="412"/>
        <end position="414"/>
    </location>
</feature>
<feature type="helix" evidence="35">
    <location>
        <begin position="415"/>
        <end position="417"/>
    </location>
</feature>
<feature type="strand" evidence="35">
    <location>
        <begin position="418"/>
        <end position="420"/>
    </location>
</feature>
<feature type="helix" evidence="35">
    <location>
        <begin position="433"/>
        <end position="436"/>
    </location>
</feature>
<feature type="turn" evidence="39">
    <location>
        <begin position="1058"/>
        <end position="1060"/>
    </location>
</feature>
<feature type="strand" evidence="39">
    <location>
        <begin position="1062"/>
        <end position="1064"/>
    </location>
</feature>
<feature type="strand" evidence="39">
    <location>
        <begin position="1071"/>
        <end position="1073"/>
    </location>
</feature>
<feature type="helix" evidence="39">
    <location>
        <begin position="1079"/>
        <end position="1082"/>
    </location>
</feature>
<feature type="turn" evidence="39">
    <location>
        <begin position="1083"/>
        <end position="1085"/>
    </location>
</feature>
<feature type="turn" evidence="39">
    <location>
        <begin position="1088"/>
        <end position="1090"/>
    </location>
</feature>
<feature type="strand" evidence="39">
    <location>
        <begin position="1099"/>
        <end position="1102"/>
    </location>
</feature>
<feature type="turn" evidence="39">
    <location>
        <begin position="1104"/>
        <end position="1106"/>
    </location>
</feature>
<feature type="strand" evidence="39">
    <location>
        <begin position="1109"/>
        <end position="1112"/>
    </location>
</feature>
<feature type="helix" evidence="39">
    <location>
        <begin position="1113"/>
        <end position="1115"/>
    </location>
</feature>
<feature type="helix" evidence="39">
    <location>
        <begin position="1120"/>
        <end position="1129"/>
    </location>
</feature>
<feature type="turn" evidence="39">
    <location>
        <begin position="1134"/>
        <end position="1136"/>
    </location>
</feature>
<feature type="helix" evidence="36">
    <location>
        <begin position="1636"/>
        <end position="1645"/>
    </location>
</feature>
<feature type="helix" evidence="36">
    <location>
        <begin position="1646"/>
        <end position="1648"/>
    </location>
</feature>
<feature type="strand" evidence="36">
    <location>
        <begin position="1650"/>
        <end position="1652"/>
    </location>
</feature>
<feature type="helix" evidence="36">
    <location>
        <begin position="1653"/>
        <end position="1660"/>
    </location>
</feature>
<feature type="helix" evidence="36">
    <location>
        <begin position="1664"/>
        <end position="1667"/>
    </location>
</feature>
<feature type="helix" evidence="36">
    <location>
        <begin position="1671"/>
        <end position="1684"/>
    </location>
</feature>
<feature type="helix" evidence="36">
    <location>
        <begin position="1687"/>
        <end position="1706"/>
    </location>
</feature>
<feature type="strand" evidence="37">
    <location>
        <begin position="4707"/>
        <end position="4709"/>
    </location>
</feature>
<feature type="helix" evidence="40">
    <location>
        <begin position="4758"/>
        <end position="4766"/>
    </location>
</feature>
<feature type="helix" evidence="40">
    <location>
        <begin position="4769"/>
        <end position="4771"/>
    </location>
</feature>
<feature type="strand" evidence="40">
    <location>
        <begin position="4773"/>
        <end position="4777"/>
    </location>
</feature>
<feature type="strand" evidence="40">
    <location>
        <begin position="4779"/>
        <end position="4789"/>
    </location>
</feature>
<feature type="strand" evidence="40">
    <location>
        <begin position="4796"/>
        <end position="4800"/>
    </location>
</feature>
<feature type="strand" evidence="40">
    <location>
        <begin position="4802"/>
        <end position="4806"/>
    </location>
</feature>
<feature type="helix" evidence="40">
    <location>
        <begin position="4807"/>
        <end position="4819"/>
    </location>
</feature>
<feature type="strand" evidence="40">
    <location>
        <begin position="4826"/>
        <end position="4828"/>
    </location>
</feature>
<feature type="strand" evidence="40">
    <location>
        <begin position="4830"/>
        <end position="4841"/>
    </location>
</feature>
<feature type="helix" evidence="40">
    <location>
        <begin position="4843"/>
        <end position="4846"/>
    </location>
</feature>
<feature type="strand" evidence="40">
    <location>
        <begin position="4854"/>
        <end position="4862"/>
    </location>
</feature>
<feature type="strand" evidence="40">
    <location>
        <begin position="4865"/>
        <end position="4874"/>
    </location>
</feature>
<feature type="turn" evidence="40">
    <location>
        <begin position="4893"/>
        <end position="4895"/>
    </location>
</feature>
<feature type="strand" evidence="38">
    <location>
        <begin position="4908"/>
        <end position="4910"/>
    </location>
</feature>
<sequence>MSSEEDKSVEQPQPPPPPPEEPGAPAPSPAAADKRPRGRPRKDGASPFQRARKKPRSRGKTAVEDEDSMDGLETTETETIVETEIKEQSAEEDAEAEVDNSKQLIPTLQRSVSEESANSLVSVGVEAKISEQLCAFCYCGEKSSLGQGDLKQFRITPGFILPWRNQPSNKKDIDDNSNGTYEKMQNSAPRKQRGQRKERSPQQNIVSCVSVSTQTASDDQAGKLWDELSLVGLPDAIDIQALFDSTGTCWAHHRCVEWSLGVCQMEEPLLVNVDKAVVSGSTERCAFCKHLGATIKCCEEKCTQMYHYPCAAGAGTFQDFSHIFLLCPEHIDQAPERSKEDANCAVCDSPGDLLDQFFCTTCGQHYHGMCLDIAVTPLKRAGWQCPECKVCQNCKQSGEDSKMLVCDTCDKGYHTFCLQPVMKSVPTNGWKCKNCRICIECGTRSSSQWHHNCLICDNCYQQQDNLCPFCGKCYHPELQKDMLHCNMCKRWVHLECDKPTDHELDTQLKEEYICMYCKHLGAEMDRLQPGEEVEIAELTTDYNNEMEVEGPEDQMVFSEQAANKDVNGQESTPGIVPDAVQVHTEEQQKSHPSESLDTDSLLIAVSSQHTVNTELEKQISNEVDSEDLKMSSEVKHICGEDQIEDKMEVTENIEVVTHQITVQQEQLQLLEEPETVVSREESRPPKLVMESVTLPLETLVSPHEESISLCPEEQLVIERLQGEKEQKENSELSTGLMDSEMTPTIEGCVKDVSYQGGKSIKLSSETESSFSSSADISKADVSSSPTPSSDLPSHDMLHNYPSALSSSAGNIMPTTYISVTPKIGMGKPAITKRKFSPGRPRSKQGAWSTHNTVSPPSWSPDISEGREIFKPRQLPGSAIWSIKVGRGSGFPGKRRPRGAGLSGRGGRGRSKLKSGIGAVVLPGVSTADISSNKDDEENSMHNTVVLFSSSDKFTLNQDMCVVCGSFGQGAEGRLLACSQCGQCYHPYCVSIKITKVVLSKGWRCLECTVCEACGKATDPGRLLLCDDCDISYHTYCLDPPLQTVPKGGWKCKWCVWCRHCGATSAGLRCEWQNNYTQCAPCASLSSCPVCYRNYREEDLILQCRQCDRWMHAVCQNLNTEEEVENVADIGFDCSMCRPYMPASNVPSSDCCESSLVAQIVTKVKELDPPKTYTQDGVCLTESGMTQLQSLTVTVPRRKRSKPKLKLKIINQNSVAVLQTPPDIQSEHSRDGEMDDSREGELMDCDGKSESSPEREAVDDETKGVEGTDGVKKRKRKPYRPGIGGFMVRQRSRTGQGKTKRSVIRKDSSGSISEQLPCRDDGWSEQLPDTLVDESVSVTESTEKIKKRYRKRKNKLEETFPAYLQEAFFGKDLLDTSRQSKISLDNLSEDGAQLLYKTNMNTGFLDPSLDPLLSSSSAPTKSGTHGPADDPLADISEVLNTDDDILGIISDDLAKSVDHSDIGPVTDDPSSLPQPNVNQSSRPLSEEQLDGILSPELDKMVTDGAILGKLYKIPELGGKDVEDLFTAVLSPANTQPTPLPQPPPPTQLLPIHNQDAFSRMPLMNGLIGSSPHLPHNSLPPGSGLGTFSAIAQSSYPDARDKNSAFNPMASDPNNSWTSSAPTVEGENDTMSNAQRSTLKWEKEEALGEMATVAPVLYTNINFPNLKEEFPDWTTRVKQIAKLWRKASSQERAPYVQKARDNRAALRINKVQMSNDSMKRQQQQDSIDPSSRIDSELFKDPLKQRESEHEQEWKFRQQMRQKSKQQAKIEATQKLEQVKNEQQQQQQQQFGSQHLLVQSGSDTPSSGIQSPLTPQPGNGNMSPAQSFHKELFTKQPPSTPTSTSSDDVFVKPQAPPPPPAPSRIPIQDSLSQAQTSQPPSPQVFSPGSSNSRPPSPMDPYAKMVGTPRPPPVGHSFSRRNSAAPVENCTPLSSVSRPLQMNETTANRPSPVRDLCSSSTTNNDPYAKPPDTPRPVMTDQFPKSLGLSRSPVVSEQTAKGPIAAGTSDHFTKPSPRADVFQRQRIPDSYARPLLTPAPLDSGPGPFKTPMQPPPSSQDPYGSVSQASRRLSVDPYERPALTPRPIDNFSHNQSNDPYSQPPLTPHPAVNESFAHPSRAFSQPGTISRPTSQDPYSQPPGTPRPVVDSYSQSSGTARSNTDPYSQPPGTPRPTTVDPYSQQPQTPRPSTQTDLFVTPVTNQRHSDPYAHPPGTPRPGISVPYSQPPATPRPRISEGFTRSSMTRPVLMPNQDPFLQAAQNRGPALPGPLVRPPDTCSQTPRPPGPGLSDTFSRVSPSAARDPYDQSPMTPRSQSDSFGTSQTAHDVADQPRPGSEGSFCASSNSPMHSQGQQFSGVSQLPGPVPTSGVTDTQNTVNMAQADTEKLRQRQKLREIILQQQQQKKIAGRQEKGSQDSPAVPHPGPLQHWQPENVNQAFTRPPPPYPGNIRSPVAPPLGPRYAVFPKDQRGPYPPDVASMGMRPHGFRFGFPGGSHGTMPSQERFLVPPQQIQGSGVSPQLRRSVSVDMPRPLNNSQMNNPVGLPQHFSPQSLPVQQHNILGQAYIELRHRAPDGRQRLPFSAPPGSVVEASSNLRHGNFIPRPDFPGPRHTDPMRRPPQGLPNQLPVHPDLEQVPPSQQEQGHSVHSSSMVMRTLNHPLGGEFSEAPLSTSVPSETTSDNLQITTQPSDGLEEKLDSDDPSVKELDVKDLEGVEVKDLDDEDLENLNLDTEDGKVVELDTLDNLETNDPNLDDLLRSGEFDIIAYTDPELDMGDKKSMFNEELDLPIDDKLDNQCVSVEPKKKEQENKTLVLSDKHSPQKKSTVTNEVKTEVLSPNSKVESKCETEKNDENKDNVDTPCSQASAHSDLNDGEKTSLHPCDPDLFEKRTNRETAGPSANVIQASTQLPAQDVINSCGITGSTPVLSSLLANEKSDNSDIRPSGSPPPPTLPASPSNHVSSLPPFIAPPGRVLDNAMNSNVTVVSRVNHVFSQGVQVNPGLIPGQSTVNHSLGTGKPATQTGPQTSQSGTSSMSGPQQLMIPQTLAQQNRERPLLLEEQPLLLQDLLDQERQEQQQQRQMQAMIRQRSEPFFPNIDFDAITDPIMKAKMVALKGINKVMAQNNLGMPPMVMSRFPFMGQVVTGTQNSEGQNLGPQAIPQDGSITHQISRPNPPNFGPGFVNDSQRKQYEEWLQETQQLLQMQQKYLEEQIGAHRKSKKALSAKQRTAKKAGREFPEEDAEQLKHVTEQQSMVQKQLEQIRKQQKEHAELIEDYRIKQQQQCAMAPPTMMPSVQPQPPLIPGATPPTMSQPTFPMVPQQLQHQQHTTVISGHTSPVRMPSLPGWQPNSAPAHLPLNPPRIQPPIAQLPIKTCTPAPGTVSNANPQSGPPPRVEFDDNNPFSESFQERERKERLREQQERQRIQLMQEVDRQRALQQRMEMEQHGMVGSEISSSRTSVSQIPFYSSDLPCDFMQPLGPLQQSPQHQQQMGQVLQQQNIQQGSINSPSTQTFMQTNERRQVGPPSFVPDSPSIPVGSPNFSSVKQGHGNLSGTSFQQSPVRPSFTPALPAAPPVANSSLPCGQDSTITHGHSYPGSTQSLIQLYSDIIPEEKGKKKRTRKKKRDDDAESTKAPSTPHSDITAPPTPGISETTSTPAVSTPSELPQQADQESVEPVGPSTPNMAAGQLCTELENKLPNSDFSQATPNQQTYANSEVDKLSMETPAKTEEIKLEKAETESCPGQEEPKLEEQNGSKVEGNAVACPVSSAQSPPHSAGAPAAKGDSGNELLKHLLKNKKSSSLLNQKPEGSICSEDDCTKDNKLVEKQNPAEGLQTLGAQMQGGFGCGNQLPKTDGGSETKKQRSKRTQRTGEKAAPRSKKRKKDEEEKQAMYSSTDTFTHLKQQNNLSNPPTPPASLPPTPPPMACQKMANGFATTEELAGKAGVLVSHEVTKTLGPKPFQLPFRPQDDLLARALAQGPKTVDVPASLPTPPHNNQEELRIQDHCGDRDTPDSFVPSSSPESVVGVEVSRYPDLSLVKEEPPEPVPSPIIPILPSTAGKSSESRRNDIKTEPGTLYFASPFGPSPNGPRSGLISVAITLHPTAAENISSVVAAFSDLLHVRIPNSYEVSSAPDVPSMGLVSSHRINPGLEYRQHLLLRGPPPGSANPPRLVSSYRLKQPNVPFPPTSNGLSGYKDSSHGIAESAALRPQWCCHCKVVILGSGVRKSFKDLTLLNKDSRESTKRVEKDIVFCSNNCFILYSSTAQAKNSENKESIPSLPQSPMRETPSKAFHQYSNNISTLDVHCLPQLPEKASPPASPPIAFPPAFEAAQVEAKPDELKVTVKLKPRLRAVHGGFEDCRPLNKKWRGMKWKKWSIHIVIPKGTFKPPCEDEIDEFLKKLGTSLKPDPVPKDYRKCCFCHEEGDGLTDGPARLLNLDLDLWVHLNCALWSTEVYETQAGALINVELALRRGLQMKCVFCHKTGATSGCHRFRCTNIYHFTCAIKAQCMFFKDKTMLCPMHKPKGIHEQELSYFAVFRRVYVQRDEVRQIASIVQRGERDHTFRVGSLIFHTIGQLLPQQMQAFHSPKALFPVGYEASRLYWSTRYANRRCRYLCSIEEKDGRPVFVIRIVEQGHEDLVLSDISPKGVWDKILEPVACVRKKSEMLQLFPAYLKGEDLFGLTVSAVARIAESLPGVEACENYTFRYGRNPLMELPLAVNPTGCARSEPKMSAHVKRFVLRPHTLNSTSTSKSFQSTVTGELNAPYSKQFVHSKSSQYRKMKTEWKSNVYLARSRIQGLGLYAARDIEKHTMVIEYIGTIIRNEVANRKEKLYESQNRGVYMFRMDNDHVIDATLTGGPARYINHSCAPNCVAEVVTFERGHKIIISSSRRIQKGEELCYDYKFDFEDDQHKIPCHCGAVNCRKWMN</sequence>
<proteinExistence type="evidence at protein level"/>
<gene>
    <name type="primary">KMT2C</name>
    <name type="synonym">HALR</name>
    <name type="synonym">KIAA1506</name>
    <name type="synonym">MLL3</name>
</gene>
<accession>Q8NEZ4</accession>
<accession>Q8NC02</accession>
<accession>Q8NDF6</accession>
<accession>Q9H9P4</accession>
<accession>Q9NR13</accession>
<accession>Q9P222</accession>
<accession>Q9UDR7</accession>
<dbReference type="EC" id="2.1.1.364" evidence="22"/>
<dbReference type="EMBL" id="AY024361">
    <property type="protein sequence ID" value="AAK00583.1"/>
    <property type="molecule type" value="mRNA"/>
</dbReference>
<dbReference type="EMBL" id="AC006017">
    <property type="protein sequence ID" value="AAD45822.1"/>
    <property type="molecule type" value="Genomic_DNA"/>
</dbReference>
<dbReference type="EMBL" id="AC104692">
    <property type="status" value="NOT_ANNOTATED_CDS"/>
    <property type="molecule type" value="Genomic_DNA"/>
</dbReference>
<dbReference type="EMBL" id="AC005631">
    <property type="status" value="NOT_ANNOTATED_CDS"/>
    <property type="molecule type" value="Genomic_DNA"/>
</dbReference>
<dbReference type="EMBL" id="AB040939">
    <property type="protein sequence ID" value="BAA96030.2"/>
    <property type="molecule type" value="mRNA"/>
</dbReference>
<dbReference type="EMBL" id="AF264750">
    <property type="protein sequence ID" value="AAF74766.2"/>
    <property type="status" value="ALT_SEQ"/>
    <property type="molecule type" value="mRNA"/>
</dbReference>
<dbReference type="EMBL" id="AK022687">
    <property type="status" value="NOT_ANNOTATED_CDS"/>
    <property type="molecule type" value="mRNA"/>
</dbReference>
<dbReference type="EMBL" id="AK075113">
    <property type="protein sequence ID" value="BAC11409.1"/>
    <property type="molecule type" value="mRNA"/>
</dbReference>
<dbReference type="EMBL" id="AL833924">
    <property type="protein sequence ID" value="CAD38780.1"/>
    <property type="molecule type" value="mRNA"/>
</dbReference>
<dbReference type="CCDS" id="CCDS5931.1">
    <molecule id="Q8NEZ4-1"/>
</dbReference>
<dbReference type="RefSeq" id="NP_733751.2">
    <molecule id="Q8NEZ4-1"/>
    <property type="nucleotide sequence ID" value="NM_170606.3"/>
</dbReference>
<dbReference type="PDB" id="2YSM">
    <property type="method" value="NMR"/>
    <property type="chains" value="A=342-439"/>
</dbReference>
<dbReference type="PDB" id="2YUK">
    <property type="method" value="NMR"/>
    <property type="chains" value="A=1631-1713"/>
</dbReference>
<dbReference type="PDB" id="3UVL">
    <property type="method" value="X-ray"/>
    <property type="resolution" value="2.20 A"/>
    <property type="chains" value="B=4707-4717"/>
</dbReference>
<dbReference type="PDB" id="4ERY">
    <property type="method" value="X-ray"/>
    <property type="resolution" value="1.30 A"/>
    <property type="chains" value="D=4703-4716"/>
</dbReference>
<dbReference type="PDB" id="5F59">
    <property type="method" value="X-ray"/>
    <property type="resolution" value="2.80 A"/>
    <property type="chains" value="A=4757-4910"/>
</dbReference>
<dbReference type="PDB" id="5F6K">
    <property type="method" value="X-ray"/>
    <property type="resolution" value="2.41 A"/>
    <property type="chains" value="C/E=4757-4911"/>
</dbReference>
<dbReference type="PDB" id="6KIW">
    <property type="method" value="EM"/>
    <property type="resolution" value="4.00 A"/>
    <property type="chains" value="K=4707-4911"/>
</dbReference>
<dbReference type="PDB" id="6MLC">
    <property type="method" value="X-ray"/>
    <property type="resolution" value="1.80 A"/>
    <property type="chains" value="A/B/C/D=1055-1144"/>
</dbReference>
<dbReference type="PDB" id="7W6L">
    <property type="method" value="X-ray"/>
    <property type="resolution" value="2.26 A"/>
    <property type="chains" value="C/E=4757-4911"/>
</dbReference>
<dbReference type="PDBsum" id="2YSM"/>
<dbReference type="PDBsum" id="2YUK"/>
<dbReference type="PDBsum" id="3UVL"/>
<dbReference type="PDBsum" id="4ERY"/>
<dbReference type="PDBsum" id="5F59"/>
<dbReference type="PDBsum" id="5F6K"/>
<dbReference type="PDBsum" id="6KIW"/>
<dbReference type="PDBsum" id="6MLC"/>
<dbReference type="PDBsum" id="7W6L"/>
<dbReference type="EMDB" id="EMD-0693"/>
<dbReference type="SMR" id="Q8NEZ4"/>
<dbReference type="BioGRID" id="121835">
    <property type="interactions" value="135"/>
</dbReference>
<dbReference type="ComplexPortal" id="CPX-7091">
    <property type="entry name" value="Histone-lysine N-methyltransferase complex, KMT2C variant"/>
</dbReference>
<dbReference type="CORUM" id="Q8NEZ4"/>
<dbReference type="DIP" id="DIP-48649N"/>
<dbReference type="FunCoup" id="Q8NEZ4">
    <property type="interactions" value="2721"/>
</dbReference>
<dbReference type="IntAct" id="Q8NEZ4">
    <property type="interactions" value="74"/>
</dbReference>
<dbReference type="MINT" id="Q8NEZ4"/>
<dbReference type="STRING" id="9606.ENSP00000262189"/>
<dbReference type="BindingDB" id="Q8NEZ4"/>
<dbReference type="ChEMBL" id="CHEMBL2189113"/>
<dbReference type="GlyCosmos" id="Q8NEZ4">
    <property type="glycosylation" value="3 sites, 1 glycan"/>
</dbReference>
<dbReference type="GlyGen" id="Q8NEZ4">
    <property type="glycosylation" value="23 sites, 4 N-linked glycans (1 site), 1 O-linked glycan (13 sites)"/>
</dbReference>
<dbReference type="iPTMnet" id="Q8NEZ4"/>
<dbReference type="PhosphoSitePlus" id="Q8NEZ4"/>
<dbReference type="BioMuta" id="KMT2C"/>
<dbReference type="DMDM" id="221222521"/>
<dbReference type="jPOST" id="Q8NEZ4"/>
<dbReference type="MassIVE" id="Q8NEZ4"/>
<dbReference type="PaxDb" id="9606-ENSP00000262189"/>
<dbReference type="PeptideAtlas" id="Q8NEZ4"/>
<dbReference type="ProteomicsDB" id="73252">
    <molecule id="Q8NEZ4-1"/>
</dbReference>
<dbReference type="ProteomicsDB" id="73253">
    <molecule id="Q8NEZ4-2"/>
</dbReference>
<dbReference type="ProteomicsDB" id="73254">
    <molecule id="Q8NEZ4-3"/>
</dbReference>
<dbReference type="Pumba" id="Q8NEZ4"/>
<dbReference type="Antibodypedia" id="33048">
    <property type="antibodies" value="85 antibodies from 22 providers"/>
</dbReference>
<dbReference type="DNASU" id="58508"/>
<dbReference type="Ensembl" id="ENST00000262189.11">
    <molecule id="Q8NEZ4-1"/>
    <property type="protein sequence ID" value="ENSP00000262189.6"/>
    <property type="gene ID" value="ENSG00000055609.21"/>
</dbReference>
<dbReference type="Ensembl" id="ENST00000682283.1">
    <molecule id="Q8NEZ4-3"/>
    <property type="protein sequence ID" value="ENSP00000507485.1"/>
    <property type="gene ID" value="ENSG00000055609.21"/>
</dbReference>
<dbReference type="GeneID" id="58508"/>
<dbReference type="KEGG" id="hsa:58508"/>
<dbReference type="MANE-Select" id="ENST00000262189.11">
    <property type="protein sequence ID" value="ENSP00000262189.6"/>
    <property type="RefSeq nucleotide sequence ID" value="NM_170606.3"/>
    <property type="RefSeq protein sequence ID" value="NP_733751.2"/>
</dbReference>
<dbReference type="UCSC" id="uc003wla.3">
    <molecule id="Q8NEZ4-1"/>
    <property type="organism name" value="human"/>
</dbReference>
<dbReference type="AGR" id="HGNC:13726"/>
<dbReference type="CTD" id="58508"/>
<dbReference type="DisGeNET" id="58508"/>
<dbReference type="GeneCards" id="KMT2C"/>
<dbReference type="HGNC" id="HGNC:13726">
    <property type="gene designation" value="KMT2C"/>
</dbReference>
<dbReference type="HPA" id="ENSG00000055609">
    <property type="expression patterns" value="Low tissue specificity"/>
</dbReference>
<dbReference type="MalaCards" id="KMT2C"/>
<dbReference type="MIM" id="606833">
    <property type="type" value="gene"/>
</dbReference>
<dbReference type="MIM" id="617768">
    <property type="type" value="phenotype"/>
</dbReference>
<dbReference type="neXtProt" id="NX_Q8NEZ4"/>
<dbReference type="OpenTargets" id="ENSG00000055609"/>
<dbReference type="Orphanet" id="261652">
    <property type="disease" value="Kleefstra syndrome due to a point mutation"/>
</dbReference>
<dbReference type="PharmGKB" id="PA30847"/>
<dbReference type="VEuPathDB" id="HostDB:ENSG00000055609"/>
<dbReference type="eggNOG" id="KOG4443">
    <property type="taxonomic scope" value="Eukaryota"/>
</dbReference>
<dbReference type="GeneTree" id="ENSGT00940000155281"/>
<dbReference type="HOGENOM" id="CLU_000065_3_0_1"/>
<dbReference type="InParanoid" id="Q8NEZ4"/>
<dbReference type="OMA" id="ENQQGVC"/>
<dbReference type="OrthoDB" id="308383at2759"/>
<dbReference type="PAN-GO" id="Q8NEZ4">
    <property type="GO annotations" value="5 GO annotations based on evolutionary models"/>
</dbReference>
<dbReference type="PhylomeDB" id="Q8NEZ4"/>
<dbReference type="TreeFam" id="TF354317"/>
<dbReference type="BioCyc" id="MetaCyc:HS00685-MONOMER"/>
<dbReference type="PathwayCommons" id="Q8NEZ4"/>
<dbReference type="Reactome" id="R-HSA-3214841">
    <property type="pathway name" value="PKMTs methylate histone lysines"/>
</dbReference>
<dbReference type="Reactome" id="R-HSA-5617472">
    <property type="pathway name" value="Activation of anterior HOX genes in hindbrain development during early embryogenesis"/>
</dbReference>
<dbReference type="Reactome" id="R-HSA-8936459">
    <property type="pathway name" value="RUNX1 regulates genes involved in megakaryocyte differentiation and platelet function"/>
</dbReference>
<dbReference type="Reactome" id="R-HSA-9772755">
    <property type="pathway name" value="Formation of WDR5-containing histone-modifying complexes"/>
</dbReference>
<dbReference type="Reactome" id="R-HSA-9818564">
    <property type="pathway name" value="Epigenetic regulation of gene expression by MLL3 and MLL4 complexes"/>
</dbReference>
<dbReference type="Reactome" id="R-HSA-9841922">
    <property type="pathway name" value="MLL4 and MLL3 complexes regulate expression of PPARG target genes in adipogenesis and hepatic steatosis"/>
</dbReference>
<dbReference type="SignaLink" id="Q8NEZ4"/>
<dbReference type="SIGNOR" id="Q8NEZ4"/>
<dbReference type="BioGRID-ORCS" id="58508">
    <property type="hits" value="36 hits in 1152 CRISPR screens"/>
</dbReference>
<dbReference type="ChiTaRS" id="KMT2C">
    <property type="organism name" value="human"/>
</dbReference>
<dbReference type="EvolutionaryTrace" id="Q8NEZ4"/>
<dbReference type="GeneWiki" id="MLL3"/>
<dbReference type="GenomeRNAi" id="58508"/>
<dbReference type="Pharos" id="Q8NEZ4">
    <property type="development level" value="Tbio"/>
</dbReference>
<dbReference type="PRO" id="PR:Q8NEZ4"/>
<dbReference type="Proteomes" id="UP000005640">
    <property type="component" value="Chromosome 7"/>
</dbReference>
<dbReference type="RNAct" id="Q8NEZ4">
    <property type="molecule type" value="protein"/>
</dbReference>
<dbReference type="Bgee" id="ENSG00000055609">
    <property type="expression patterns" value="Expressed in oocyte and 197 other cell types or tissues"/>
</dbReference>
<dbReference type="ExpressionAtlas" id="Q8NEZ4">
    <property type="expression patterns" value="baseline and differential"/>
</dbReference>
<dbReference type="GO" id="GO:0005829">
    <property type="term" value="C:cytosol"/>
    <property type="evidence" value="ECO:0000314"/>
    <property type="project" value="HPA"/>
</dbReference>
<dbReference type="GO" id="GO:0035097">
    <property type="term" value="C:histone methyltransferase complex"/>
    <property type="evidence" value="ECO:0000314"/>
    <property type="project" value="MGI"/>
</dbReference>
<dbReference type="GO" id="GO:0044666">
    <property type="term" value="C:MLL3/4 complex"/>
    <property type="evidence" value="ECO:0000314"/>
    <property type="project" value="UniProtKB"/>
</dbReference>
<dbReference type="GO" id="GO:0005654">
    <property type="term" value="C:nucleoplasm"/>
    <property type="evidence" value="ECO:0000314"/>
    <property type="project" value="HPA"/>
</dbReference>
<dbReference type="GO" id="GO:0005634">
    <property type="term" value="C:nucleus"/>
    <property type="evidence" value="ECO:0000314"/>
    <property type="project" value="MGI"/>
</dbReference>
<dbReference type="GO" id="GO:0016746">
    <property type="term" value="F:acyltransferase activity"/>
    <property type="evidence" value="ECO:0007669"/>
    <property type="project" value="UniProtKB-KW"/>
</dbReference>
<dbReference type="GO" id="GO:0003677">
    <property type="term" value="F:DNA binding"/>
    <property type="evidence" value="ECO:0007669"/>
    <property type="project" value="UniProtKB-KW"/>
</dbReference>
<dbReference type="GO" id="GO:0042800">
    <property type="term" value="F:histone H3K4 methyltransferase activity"/>
    <property type="evidence" value="ECO:0000314"/>
    <property type="project" value="MGI"/>
</dbReference>
<dbReference type="GO" id="GO:0140945">
    <property type="term" value="F:histone H3K4 monomethyltransferase activity"/>
    <property type="evidence" value="ECO:0007669"/>
    <property type="project" value="RHEA"/>
</dbReference>
<dbReference type="GO" id="GO:0140999">
    <property type="term" value="F:histone H3K4 trimethyltransferase activity"/>
    <property type="evidence" value="ECO:0007669"/>
    <property type="project" value="UniProtKB-EC"/>
</dbReference>
<dbReference type="GO" id="GO:0042054">
    <property type="term" value="F:histone methyltransferase activity"/>
    <property type="evidence" value="ECO:0000314"/>
    <property type="project" value="UniProtKB"/>
</dbReference>
<dbReference type="GO" id="GO:0003723">
    <property type="term" value="F:RNA binding"/>
    <property type="evidence" value="ECO:0007005"/>
    <property type="project" value="UniProtKB"/>
</dbReference>
<dbReference type="GO" id="GO:0003713">
    <property type="term" value="F:transcription coactivator activity"/>
    <property type="evidence" value="ECO:0000318"/>
    <property type="project" value="GO_Central"/>
</dbReference>
<dbReference type="GO" id="GO:0008270">
    <property type="term" value="F:zinc ion binding"/>
    <property type="evidence" value="ECO:0007669"/>
    <property type="project" value="UniProtKB-KW"/>
</dbReference>
<dbReference type="GO" id="GO:0032259">
    <property type="term" value="P:methylation"/>
    <property type="evidence" value="ECO:0007669"/>
    <property type="project" value="UniProtKB-KW"/>
</dbReference>
<dbReference type="GO" id="GO:0045944">
    <property type="term" value="P:positive regulation of transcription by RNA polymerase II"/>
    <property type="evidence" value="ECO:0000318"/>
    <property type="project" value="GO_Central"/>
</dbReference>
<dbReference type="CDD" id="cd15696">
    <property type="entry name" value="ePHD1_KMT2C"/>
    <property type="match status" value="1"/>
</dbReference>
<dbReference type="CDD" id="cd15697">
    <property type="entry name" value="ePHD2_KMT2C"/>
    <property type="match status" value="1"/>
</dbReference>
<dbReference type="CDD" id="cd22026">
    <property type="entry name" value="HMG-box_KMT2C"/>
    <property type="match status" value="1"/>
</dbReference>
<dbReference type="CDD" id="cd15509">
    <property type="entry name" value="PHD1_KMT2C_like"/>
    <property type="match status" value="1"/>
</dbReference>
<dbReference type="CDD" id="cd15594">
    <property type="entry name" value="PHD2_KMT2C"/>
    <property type="match status" value="1"/>
</dbReference>
<dbReference type="CDD" id="cd15511">
    <property type="entry name" value="PHD3_KMT2C"/>
    <property type="match status" value="1"/>
</dbReference>
<dbReference type="CDD" id="cd15596">
    <property type="entry name" value="PHD4_KMT2C"/>
    <property type="match status" value="1"/>
</dbReference>
<dbReference type="CDD" id="cd15513">
    <property type="entry name" value="PHD5_KMT2C_like"/>
    <property type="match status" value="1"/>
</dbReference>
<dbReference type="CDD" id="cd15600">
    <property type="entry name" value="PHD6_KMT2C"/>
    <property type="match status" value="1"/>
</dbReference>
<dbReference type="CDD" id="cd19171">
    <property type="entry name" value="SET_KMT2C_2D"/>
    <property type="match status" value="1"/>
</dbReference>
<dbReference type="FunFam" id="1.10.30.10:FF:000009">
    <property type="entry name" value="Histone-lysine N-methyltransferase"/>
    <property type="match status" value="1"/>
</dbReference>
<dbReference type="FunFam" id="2.170.270.10:FF:000003">
    <property type="entry name" value="Histone-lysine N-methyltransferase"/>
    <property type="match status" value="1"/>
</dbReference>
<dbReference type="FunFam" id="3.30.160.360:FF:000001">
    <property type="entry name" value="Histone-lysine N-methyltransferase"/>
    <property type="match status" value="1"/>
</dbReference>
<dbReference type="FunFam" id="3.30.40.10:FF:000002">
    <property type="entry name" value="Histone-lysine N-methyltransferase"/>
    <property type="match status" value="1"/>
</dbReference>
<dbReference type="FunFam" id="3.30.40.10:FF:000049">
    <property type="entry name" value="Histone-lysine N-methyltransferase"/>
    <property type="match status" value="1"/>
</dbReference>
<dbReference type="FunFam" id="3.30.40.10:FF:000070">
    <property type="entry name" value="Histone-lysine N-methyltransferase"/>
    <property type="match status" value="1"/>
</dbReference>
<dbReference type="FunFam" id="3.30.40.10:FF:001142">
    <property type="entry name" value="Histone-lysine N-methyltransferase"/>
    <property type="match status" value="1"/>
</dbReference>
<dbReference type="FunFam" id="3.30.40.10:FF:000080">
    <property type="entry name" value="Histone-lysine N-methyltransferase 2C"/>
    <property type="match status" value="1"/>
</dbReference>
<dbReference type="FunFam" id="3.30.40.10:FF:000095">
    <property type="entry name" value="Histone-lysine N-methyltransferase 2C"/>
    <property type="match status" value="1"/>
</dbReference>
<dbReference type="FunFam" id="3.30.40.10:FF:000237">
    <property type="entry name" value="Histone-lysine N-methyltransferase 2C"/>
    <property type="match status" value="1"/>
</dbReference>
<dbReference type="Gene3D" id="3.30.160.360">
    <property type="match status" value="1"/>
</dbReference>
<dbReference type="Gene3D" id="1.10.30.10">
    <property type="entry name" value="High mobility group box domain"/>
    <property type="match status" value="1"/>
</dbReference>
<dbReference type="Gene3D" id="2.170.270.10">
    <property type="entry name" value="SET domain"/>
    <property type="match status" value="1"/>
</dbReference>
<dbReference type="Gene3D" id="3.30.40.10">
    <property type="entry name" value="Zinc/RING finger domain, C3HC4 (zinc finger)"/>
    <property type="match status" value="7"/>
</dbReference>
<dbReference type="IDEAL" id="IID00389"/>
<dbReference type="InterPro" id="IPR034732">
    <property type="entry name" value="EPHD"/>
</dbReference>
<dbReference type="InterPro" id="IPR003889">
    <property type="entry name" value="FYrich_C"/>
</dbReference>
<dbReference type="InterPro" id="IPR003888">
    <property type="entry name" value="FYrich_N"/>
</dbReference>
<dbReference type="InterPro" id="IPR009071">
    <property type="entry name" value="HMG_box_dom"/>
</dbReference>
<dbReference type="InterPro" id="IPR036910">
    <property type="entry name" value="HMG_box_dom_sf"/>
</dbReference>
<dbReference type="InterPro" id="IPR000637">
    <property type="entry name" value="HMGI/Y_DNA-bd_CS"/>
</dbReference>
<dbReference type="InterPro" id="IPR041967">
    <property type="entry name" value="KMT2C_ePHD1"/>
</dbReference>
<dbReference type="InterPro" id="IPR041968">
    <property type="entry name" value="KMT2C_ePHD2"/>
</dbReference>
<dbReference type="InterPro" id="IPR047004">
    <property type="entry name" value="KMT2C_PHD2"/>
</dbReference>
<dbReference type="InterPro" id="IPR047003">
    <property type="entry name" value="KMT2C_PHD4"/>
</dbReference>
<dbReference type="InterPro" id="IPR047005">
    <property type="entry name" value="KMT2C_PHD6"/>
</dbReference>
<dbReference type="InterPro" id="IPR037877">
    <property type="entry name" value="PHD3_KMT2C"/>
</dbReference>
<dbReference type="InterPro" id="IPR003616">
    <property type="entry name" value="Post-SET_dom"/>
</dbReference>
<dbReference type="InterPro" id="IPR001214">
    <property type="entry name" value="SET_dom"/>
</dbReference>
<dbReference type="InterPro" id="IPR046341">
    <property type="entry name" value="SET_dom_sf"/>
</dbReference>
<dbReference type="InterPro" id="IPR011011">
    <property type="entry name" value="Znf_FYVE_PHD"/>
</dbReference>
<dbReference type="InterPro" id="IPR001965">
    <property type="entry name" value="Znf_PHD"/>
</dbReference>
<dbReference type="InterPro" id="IPR019787">
    <property type="entry name" value="Znf_PHD-finger"/>
</dbReference>
<dbReference type="InterPro" id="IPR001841">
    <property type="entry name" value="Znf_RING"/>
</dbReference>
<dbReference type="InterPro" id="IPR013083">
    <property type="entry name" value="Znf_RING/FYVE/PHD"/>
</dbReference>
<dbReference type="PANTHER" id="PTHR45888:SF1">
    <property type="entry name" value="HISTONE-LYSINE N-METHYLTRANSFERASE 2C"/>
    <property type="match status" value="1"/>
</dbReference>
<dbReference type="PANTHER" id="PTHR45888">
    <property type="entry name" value="HL01030P-RELATED"/>
    <property type="match status" value="1"/>
</dbReference>
<dbReference type="Pfam" id="PF05965">
    <property type="entry name" value="FYRC"/>
    <property type="match status" value="1"/>
</dbReference>
<dbReference type="Pfam" id="PF05964">
    <property type="entry name" value="FYRN"/>
    <property type="match status" value="1"/>
</dbReference>
<dbReference type="Pfam" id="PF00628">
    <property type="entry name" value="PHD"/>
    <property type="match status" value="4"/>
</dbReference>
<dbReference type="Pfam" id="PF00856">
    <property type="entry name" value="SET"/>
    <property type="match status" value="1"/>
</dbReference>
<dbReference type="Pfam" id="PF13771">
    <property type="entry name" value="zf-HC5HC2H"/>
    <property type="match status" value="1"/>
</dbReference>
<dbReference type="Pfam" id="PF13832">
    <property type="entry name" value="zf-HC5HC2H_2"/>
    <property type="match status" value="1"/>
</dbReference>
<dbReference type="SMART" id="SM00542">
    <property type="entry name" value="FYRC"/>
    <property type="match status" value="1"/>
</dbReference>
<dbReference type="SMART" id="SM00541">
    <property type="entry name" value="FYRN"/>
    <property type="match status" value="1"/>
</dbReference>
<dbReference type="SMART" id="SM00398">
    <property type="entry name" value="HMG"/>
    <property type="match status" value="1"/>
</dbReference>
<dbReference type="SMART" id="SM00249">
    <property type="entry name" value="PHD"/>
    <property type="match status" value="8"/>
</dbReference>
<dbReference type="SMART" id="SM00508">
    <property type="entry name" value="PostSET"/>
    <property type="match status" value="1"/>
</dbReference>
<dbReference type="SMART" id="SM00184">
    <property type="entry name" value="RING"/>
    <property type="match status" value="4"/>
</dbReference>
<dbReference type="SMART" id="SM00317">
    <property type="entry name" value="SET"/>
    <property type="match status" value="1"/>
</dbReference>
<dbReference type="SUPFAM" id="SSF57903">
    <property type="entry name" value="FYVE/PHD zinc finger"/>
    <property type="match status" value="6"/>
</dbReference>
<dbReference type="SUPFAM" id="SSF47095">
    <property type="entry name" value="HMG-box"/>
    <property type="match status" value="1"/>
</dbReference>
<dbReference type="SUPFAM" id="SSF82199">
    <property type="entry name" value="SET domain"/>
    <property type="match status" value="1"/>
</dbReference>
<dbReference type="PROSITE" id="PS50216">
    <property type="entry name" value="DHHC"/>
    <property type="match status" value="1"/>
</dbReference>
<dbReference type="PROSITE" id="PS51805">
    <property type="entry name" value="EPHD"/>
    <property type="match status" value="2"/>
</dbReference>
<dbReference type="PROSITE" id="PS51543">
    <property type="entry name" value="FYRC"/>
    <property type="match status" value="1"/>
</dbReference>
<dbReference type="PROSITE" id="PS51542">
    <property type="entry name" value="FYRN"/>
    <property type="match status" value="1"/>
</dbReference>
<dbReference type="PROSITE" id="PS00354">
    <property type="entry name" value="HMGI_Y"/>
    <property type="match status" value="1"/>
</dbReference>
<dbReference type="PROSITE" id="PS50868">
    <property type="entry name" value="POST_SET"/>
    <property type="match status" value="1"/>
</dbReference>
<dbReference type="PROSITE" id="PS50280">
    <property type="entry name" value="SET"/>
    <property type="match status" value="1"/>
</dbReference>
<dbReference type="PROSITE" id="PS01359">
    <property type="entry name" value="ZF_PHD_1"/>
    <property type="match status" value="5"/>
</dbReference>
<dbReference type="PROSITE" id="PS50016">
    <property type="entry name" value="ZF_PHD_2"/>
    <property type="match status" value="6"/>
</dbReference>
<dbReference type="PROSITE" id="PS50089">
    <property type="entry name" value="ZF_RING_2"/>
    <property type="match status" value="1"/>
</dbReference>
<organism>
    <name type="scientific">Homo sapiens</name>
    <name type="common">Human</name>
    <dbReference type="NCBI Taxonomy" id="9606"/>
    <lineage>
        <taxon>Eukaryota</taxon>
        <taxon>Metazoa</taxon>
        <taxon>Chordata</taxon>
        <taxon>Craniata</taxon>
        <taxon>Vertebrata</taxon>
        <taxon>Euteleostomi</taxon>
        <taxon>Mammalia</taxon>
        <taxon>Eutheria</taxon>
        <taxon>Euarchontoglires</taxon>
        <taxon>Primates</taxon>
        <taxon>Haplorrhini</taxon>
        <taxon>Catarrhini</taxon>
        <taxon>Hominidae</taxon>
        <taxon>Homo</taxon>
    </lineage>
</organism>
<name>KMT2C_HUMAN</name>
<protein>
    <recommendedName>
        <fullName>Histone-lysine N-methyltransferase 2C</fullName>
        <shortName>Lysine N-methyltransferase 2C</shortName>
        <ecNumber evidence="22">2.1.1.364</ecNumber>
    </recommendedName>
    <alternativeName>
        <fullName>Homologous to ALR protein</fullName>
    </alternativeName>
    <alternativeName>
        <fullName>Myeloid/lymphoid or mixed-lineage leukemia protein 3</fullName>
    </alternativeName>
</protein>
<comment type="function">
    <text evidence="17 21 22">Histone methyltransferase that catalyzes methyl group transfer from S-adenosyl-L-methionine to the epsilon-amino group of 'Lys-4' of histone H3 (H3K4) (PubMed:25561738). Part of chromatin remodeling machinery predominantly forms H3K4me1 methylation marks at active chromatin sites where transcription and DNA repair take place (PubMed:22266653, PubMed:24081332, PubMed:25561738). Likely plays a redundant role with KMT2D in enriching H3K4me1 mark on primed and active enhancer elements (PubMed:24081332).</text>
</comment>
<comment type="catalytic activity">
    <reaction evidence="22">
        <text>L-lysyl(4)-[histone H3] + S-adenosyl-L-methionine = N(6)-methyl-L-lysyl(4)-[histone H3] + S-adenosyl-L-homocysteine + H(+)</text>
        <dbReference type="Rhea" id="RHEA:60264"/>
        <dbReference type="Rhea" id="RHEA-COMP:15543"/>
        <dbReference type="Rhea" id="RHEA-COMP:15547"/>
        <dbReference type="ChEBI" id="CHEBI:15378"/>
        <dbReference type="ChEBI" id="CHEBI:29969"/>
        <dbReference type="ChEBI" id="CHEBI:57856"/>
        <dbReference type="ChEBI" id="CHEBI:59789"/>
        <dbReference type="ChEBI" id="CHEBI:61929"/>
        <dbReference type="EC" id="2.1.1.364"/>
    </reaction>
    <physiologicalReaction direction="left-to-right" evidence="26 27">
        <dbReference type="Rhea" id="RHEA:60265"/>
    </physiologicalReaction>
</comment>
<comment type="subunit">
    <text evidence="15 16 17 18 20 22">Component of the MLL3 complex (also named ASCOM complex), at least composed of catalytic subunit KMT2C/MLL3, ASH2L, RBBP5, WDR5, NCOA6, DPY30, KDM6A, PAXIP1/PTIP, PAGR1 and alpha- and beta-tubulin (PubMed:17021013, PubMed:17500065, PubMed:23508102). Forms a core complex with the evolutionary conserved subcomplex WRAD composed of WDR5, RBBP5, ASH2L/ASH2 and DPY30 subunits; WRAD differentially stimulates the methyltransferase activity (PubMed:25561738). Interacts (via WIN motif) with WDR5 (PubMed:22266653, PubMed:22665483).</text>
</comment>
<comment type="interaction">
    <interactant intactId="EBI-1042997">
        <id>Q8NEZ4</id>
    </interactant>
    <interactant intactId="EBI-16130425">
        <id>Q9UBL3-3</id>
        <label>ASH2L</label>
    </interactant>
    <organismsDiffer>false</organismsDiffer>
    <experiments>5</experiments>
</comment>
<comment type="interaction">
    <interactant intactId="EBI-1042997">
        <id>Q8NEZ4</id>
    </interactant>
    <interactant intactId="EBI-78670">
        <id>Q14686</id>
        <label>NCOA6</label>
    </interactant>
    <organismsDiffer>false</organismsDiffer>
    <experiments>7</experiments>
</comment>
<comment type="interaction">
    <interactant intactId="EBI-1042997">
        <id>Q8NEZ4</id>
    </interactant>
    <interactant intactId="EBI-540834">
        <id>P61964</id>
        <label>WDR5</label>
    </interactant>
    <organismsDiffer>false</organismsDiffer>
    <experiments>6</experiments>
</comment>
<comment type="subcellular location">
    <subcellularLocation>
        <location evidence="20">Nucleus</location>
    </subcellularLocation>
</comment>
<comment type="alternative products">
    <event type="alternative splicing"/>
    <isoform>
        <id>Q8NEZ4-1</id>
        <name>1</name>
        <sequence type="displayed"/>
    </isoform>
    <isoform>
        <id>Q8NEZ4-2</id>
        <name>2</name>
        <sequence type="described" ref="VSP_008562 VSP_036223"/>
    </isoform>
    <isoform>
        <id>Q8NEZ4-3</id>
        <name>3</name>
        <sequence type="described" ref="VSP_008562"/>
    </isoform>
</comment>
<comment type="tissue specificity">
    <text>Highly expressed in testis and ovary, followed by brain and liver. Also expressed in placenta, peripherical blood, fetal thymus, heart, lung and kidney. Within brain, expression was highest in hippocampus, caudate nucleus, and substantia nigra. Not detected in skeletal muscle and fetal liver.</text>
</comment>
<comment type="domain">
    <text>The SET domain interacts with histone H3 but not H2A, H2B and H4, and may have a H3 lysine specific methylation activity.</text>
</comment>
<comment type="disease" evidence="19 23">
    <disease id="DI-05142">
        <name>Kleefstra syndrome 2</name>
        <acronym>KLEFS2</acronym>
        <description>A form of Kleefstra syndrome, an autosomal dominant disease characterized by variable intellectual disability, psychomotor developmental delay, seizures, behavioral abnormalities, and facial dysmorphisms.</description>
        <dbReference type="MIM" id="617768"/>
    </disease>
    <text>The disease is caused by variants affecting the gene represented in this entry.</text>
</comment>
<comment type="miscellaneous">
    <text>Found in a critical region of chromosome 7, which is commonly deleted in malignant myeloid disorders. Partial duplication of the KMT2C gene are found in the juxtacentromeric region of chromosomes 1, 2, 13 and 21. Juxtacentromeric reshuffling of the KMT2C gene has generated the BAGE genes.</text>
</comment>
<comment type="similarity">
    <text evidence="8">Belongs to the class V-like SAM-binding methyltransferase superfamily. Histone-lysine methyltransferase family. TRX/MLL subfamily.</text>
</comment>
<comment type="sequence caution" evidence="25">
    <conflict type="miscellaneous discrepancy">
        <sequence resource="EMBL-CDS" id="AAF74766"/>
    </conflict>
    <text>Intron retention.</text>
</comment>
<keyword id="KW-0002">3D-structure</keyword>
<keyword id="KW-0007">Acetylation</keyword>
<keyword id="KW-0010">Activator</keyword>
<keyword id="KW-0012">Acyltransferase</keyword>
<keyword id="KW-0025">Alternative splicing</keyword>
<keyword id="KW-0156">Chromatin regulator</keyword>
<keyword id="KW-0175">Coiled coil</keyword>
<keyword id="KW-0225">Disease variant</keyword>
<keyword id="KW-0238">DNA-binding</keyword>
<keyword id="KW-0991">Intellectual disability</keyword>
<keyword id="KW-0449">Lipoprotein</keyword>
<keyword id="KW-0479">Metal-binding</keyword>
<keyword id="KW-0488">Methylation</keyword>
<keyword id="KW-0489">Methyltransferase</keyword>
<keyword id="KW-0539">Nucleus</keyword>
<keyword id="KW-0564">Palmitate</keyword>
<keyword id="KW-0597">Phosphoprotein</keyword>
<keyword id="KW-1267">Proteomics identification</keyword>
<keyword id="KW-1185">Reference proteome</keyword>
<keyword id="KW-0677">Repeat</keyword>
<keyword id="KW-0949">S-adenosyl-L-methionine</keyword>
<keyword id="KW-0804">Transcription</keyword>
<keyword id="KW-0805">Transcription regulation</keyword>
<keyword id="KW-0808">Transferase</keyword>
<keyword id="KW-0862">Zinc</keyword>
<keyword id="KW-0863">Zinc-finger</keyword>
<reference key="1">
    <citation type="journal article" date="2002" name="Gene">
        <title>MLL3, a new human member of the TRX/MLL gene family, maps to 7q36, a chromosome region frequently deleted in myeloid leukaemia.</title>
        <authorList>
            <person name="Ruault M."/>
            <person name="Brun M.-E."/>
            <person name="Ventura M."/>
            <person name="Roizes G."/>
            <person name="De Sario A."/>
        </authorList>
    </citation>
    <scope>NUCLEOTIDE SEQUENCE [MRNA] (ISOFORM 1)</scope>
    <scope>VARIANT PRO-526</scope>
    <source>
        <tissue>Fetal thymus</tissue>
    </source>
</reference>
<reference key="2">
    <citation type="journal article" date="2003" name="Nature">
        <title>The DNA sequence of human chromosome 7.</title>
        <authorList>
            <person name="Hillier L.W."/>
            <person name="Fulton R.S."/>
            <person name="Fulton L.A."/>
            <person name="Graves T.A."/>
            <person name="Pepin K.H."/>
            <person name="Wagner-McPherson C."/>
            <person name="Layman D."/>
            <person name="Maas J."/>
            <person name="Jaeger S."/>
            <person name="Walker R."/>
            <person name="Wylie K."/>
            <person name="Sekhon M."/>
            <person name="Becker M.C."/>
            <person name="O'Laughlin M.D."/>
            <person name="Schaller M.E."/>
            <person name="Fewell G.A."/>
            <person name="Delehaunty K.D."/>
            <person name="Miner T.L."/>
            <person name="Nash W.E."/>
            <person name="Cordes M."/>
            <person name="Du H."/>
            <person name="Sun H."/>
            <person name="Edwards J."/>
            <person name="Bradshaw-Cordum H."/>
            <person name="Ali J."/>
            <person name="Andrews S."/>
            <person name="Isak A."/>
            <person name="Vanbrunt A."/>
            <person name="Nguyen C."/>
            <person name="Du F."/>
            <person name="Lamar B."/>
            <person name="Courtney L."/>
            <person name="Kalicki J."/>
            <person name="Ozersky P."/>
            <person name="Bielicki L."/>
            <person name="Scott K."/>
            <person name="Holmes A."/>
            <person name="Harkins R."/>
            <person name="Harris A."/>
            <person name="Strong C.M."/>
            <person name="Hou S."/>
            <person name="Tomlinson C."/>
            <person name="Dauphin-Kohlberg S."/>
            <person name="Kozlowicz-Reilly A."/>
            <person name="Leonard S."/>
            <person name="Rohlfing T."/>
            <person name="Rock S.M."/>
            <person name="Tin-Wollam A.-M."/>
            <person name="Abbott A."/>
            <person name="Minx P."/>
            <person name="Maupin R."/>
            <person name="Strowmatt C."/>
            <person name="Latreille P."/>
            <person name="Miller N."/>
            <person name="Johnson D."/>
            <person name="Murray J."/>
            <person name="Woessner J.P."/>
            <person name="Wendl M.C."/>
            <person name="Yang S.-P."/>
            <person name="Schultz B.R."/>
            <person name="Wallis J.W."/>
            <person name="Spieth J."/>
            <person name="Bieri T.A."/>
            <person name="Nelson J.O."/>
            <person name="Berkowicz N."/>
            <person name="Wohldmann P.E."/>
            <person name="Cook L.L."/>
            <person name="Hickenbotham M.T."/>
            <person name="Eldred J."/>
            <person name="Williams D."/>
            <person name="Bedell J.A."/>
            <person name="Mardis E.R."/>
            <person name="Clifton S.W."/>
            <person name="Chissoe S.L."/>
            <person name="Marra M.A."/>
            <person name="Raymond C."/>
            <person name="Haugen E."/>
            <person name="Gillett W."/>
            <person name="Zhou Y."/>
            <person name="James R."/>
            <person name="Phelps K."/>
            <person name="Iadanoto S."/>
            <person name="Bubb K."/>
            <person name="Simms E."/>
            <person name="Levy R."/>
            <person name="Clendenning J."/>
            <person name="Kaul R."/>
            <person name="Kent W.J."/>
            <person name="Furey T.S."/>
            <person name="Baertsch R.A."/>
            <person name="Brent M.R."/>
            <person name="Keibler E."/>
            <person name="Flicek P."/>
            <person name="Bork P."/>
            <person name="Suyama M."/>
            <person name="Bailey J.A."/>
            <person name="Portnoy M.E."/>
            <person name="Torrents D."/>
            <person name="Chinwalla A.T."/>
            <person name="Gish W.R."/>
            <person name="Eddy S.R."/>
            <person name="McPherson J.D."/>
            <person name="Olson M.V."/>
            <person name="Eichler E.E."/>
            <person name="Green E.D."/>
            <person name="Waterston R.H."/>
            <person name="Wilson R.K."/>
        </authorList>
    </citation>
    <scope>NUCLEOTIDE SEQUENCE [LARGE SCALE GENOMIC DNA]</scope>
</reference>
<reference key="3">
    <citation type="journal article" date="2000" name="DNA Res.">
        <title>Prediction of the coding sequences of unidentified human genes. XVII. The complete sequences of 100 new cDNA clones from brain which code for large proteins in vitro.</title>
        <authorList>
            <person name="Nagase T."/>
            <person name="Kikuno R."/>
            <person name="Ishikawa K."/>
            <person name="Hirosawa M."/>
            <person name="Ohara O."/>
        </authorList>
    </citation>
    <scope>NUCLEOTIDE SEQUENCE [LARGE SCALE MRNA] OF 556-3865 (ISOFORM 1)</scope>
    <source>
        <tissue>Brain</tissue>
    </source>
</reference>
<reference key="4">
    <citation type="journal article" date="2002" name="DNA Res.">
        <title>Construction of expression-ready cDNA clones for KIAA genes: manual curation of 330 KIAA cDNA clones.</title>
        <authorList>
            <person name="Nakajima D."/>
            <person name="Okazaki N."/>
            <person name="Yamakawa H."/>
            <person name="Kikuno R."/>
            <person name="Ohara O."/>
            <person name="Nagase T."/>
        </authorList>
    </citation>
    <scope>SEQUENCE REVISION</scope>
</reference>
<reference key="5">
    <citation type="journal article" date="2001" name="Cancer Detect. Prev.">
        <title>Novel human HALR (MLL3) gene encodes a protein homologous to ALR and to ALL-1 involved in leukemia, and maps to chromosome 7q36 associated with leukemia and developmental defects.</title>
        <authorList>
            <person name="Tan Y.C."/>
            <person name="Chow V.T."/>
        </authorList>
    </citation>
    <scope>NUCLEOTIDE SEQUENCE [MRNA] OF 845-4911 (ISOFORM 2)</scope>
    <source>
        <tissue>Cervix carcinoma</tissue>
    </source>
</reference>
<reference key="6">
    <citation type="journal article" date="2004" name="Nat. Genet.">
        <title>Complete sequencing and characterization of 21,243 full-length human cDNAs.</title>
        <authorList>
            <person name="Ota T."/>
            <person name="Suzuki Y."/>
            <person name="Nishikawa T."/>
            <person name="Otsuki T."/>
            <person name="Sugiyama T."/>
            <person name="Irie R."/>
            <person name="Wakamatsu A."/>
            <person name="Hayashi K."/>
            <person name="Sato H."/>
            <person name="Nagai K."/>
            <person name="Kimura K."/>
            <person name="Makita H."/>
            <person name="Sekine M."/>
            <person name="Obayashi M."/>
            <person name="Nishi T."/>
            <person name="Shibahara T."/>
            <person name="Tanaka T."/>
            <person name="Ishii S."/>
            <person name="Yamamoto J."/>
            <person name="Saito K."/>
            <person name="Kawai Y."/>
            <person name="Isono Y."/>
            <person name="Nakamura Y."/>
            <person name="Nagahari K."/>
            <person name="Murakami K."/>
            <person name="Yasuda T."/>
            <person name="Iwayanagi T."/>
            <person name="Wagatsuma M."/>
            <person name="Shiratori A."/>
            <person name="Sudo H."/>
            <person name="Hosoiri T."/>
            <person name="Kaku Y."/>
            <person name="Kodaira H."/>
            <person name="Kondo H."/>
            <person name="Sugawara M."/>
            <person name="Takahashi M."/>
            <person name="Kanda K."/>
            <person name="Yokoi T."/>
            <person name="Furuya T."/>
            <person name="Kikkawa E."/>
            <person name="Omura Y."/>
            <person name="Abe K."/>
            <person name="Kamihara K."/>
            <person name="Katsuta N."/>
            <person name="Sato K."/>
            <person name="Tanikawa M."/>
            <person name="Yamazaki M."/>
            <person name="Ninomiya K."/>
            <person name="Ishibashi T."/>
            <person name="Yamashita H."/>
            <person name="Murakawa K."/>
            <person name="Fujimori K."/>
            <person name="Tanai H."/>
            <person name="Kimata M."/>
            <person name="Watanabe M."/>
            <person name="Hiraoka S."/>
            <person name="Chiba Y."/>
            <person name="Ishida S."/>
            <person name="Ono Y."/>
            <person name="Takiguchi S."/>
            <person name="Watanabe S."/>
            <person name="Yosida M."/>
            <person name="Hotuta T."/>
            <person name="Kusano J."/>
            <person name="Kanehori K."/>
            <person name="Takahashi-Fujii A."/>
            <person name="Hara H."/>
            <person name="Tanase T.-O."/>
            <person name="Nomura Y."/>
            <person name="Togiya S."/>
            <person name="Komai F."/>
            <person name="Hara R."/>
            <person name="Takeuchi K."/>
            <person name="Arita M."/>
            <person name="Imose N."/>
            <person name="Musashino K."/>
            <person name="Yuuki H."/>
            <person name="Oshima A."/>
            <person name="Sasaki N."/>
            <person name="Aotsuka S."/>
            <person name="Yoshikawa Y."/>
            <person name="Matsunawa H."/>
            <person name="Ichihara T."/>
            <person name="Shiohata N."/>
            <person name="Sano S."/>
            <person name="Moriya S."/>
            <person name="Momiyama H."/>
            <person name="Satoh N."/>
            <person name="Takami S."/>
            <person name="Terashima Y."/>
            <person name="Suzuki O."/>
            <person name="Nakagawa S."/>
            <person name="Senoh A."/>
            <person name="Mizoguchi H."/>
            <person name="Goto Y."/>
            <person name="Shimizu F."/>
            <person name="Wakebe H."/>
            <person name="Hishigaki H."/>
            <person name="Watanabe T."/>
            <person name="Sugiyama A."/>
            <person name="Takemoto M."/>
            <person name="Kawakami B."/>
            <person name="Yamazaki M."/>
            <person name="Watanabe K."/>
            <person name="Kumagai A."/>
            <person name="Itakura S."/>
            <person name="Fukuzumi Y."/>
            <person name="Fujimori Y."/>
            <person name="Komiyama M."/>
            <person name="Tashiro H."/>
            <person name="Tanigami A."/>
            <person name="Fujiwara T."/>
            <person name="Ono T."/>
            <person name="Yamada K."/>
            <person name="Fujii Y."/>
            <person name="Ozaki K."/>
            <person name="Hirao M."/>
            <person name="Ohmori Y."/>
            <person name="Kawabata A."/>
            <person name="Hikiji T."/>
            <person name="Kobatake N."/>
            <person name="Inagaki H."/>
            <person name="Ikema Y."/>
            <person name="Okamoto S."/>
            <person name="Okitani R."/>
            <person name="Kawakami T."/>
            <person name="Noguchi S."/>
            <person name="Itoh T."/>
            <person name="Shigeta K."/>
            <person name="Senba T."/>
            <person name="Matsumura K."/>
            <person name="Nakajima Y."/>
            <person name="Mizuno T."/>
            <person name="Morinaga M."/>
            <person name="Sasaki M."/>
            <person name="Togashi T."/>
            <person name="Oyama M."/>
            <person name="Hata H."/>
            <person name="Watanabe M."/>
            <person name="Komatsu T."/>
            <person name="Mizushima-Sugano J."/>
            <person name="Satoh T."/>
            <person name="Shirai Y."/>
            <person name="Takahashi Y."/>
            <person name="Nakagawa K."/>
            <person name="Okumura K."/>
            <person name="Nagase T."/>
            <person name="Nomura N."/>
            <person name="Kikuchi H."/>
            <person name="Masuho Y."/>
            <person name="Yamashita R."/>
            <person name="Nakai K."/>
            <person name="Yada T."/>
            <person name="Nakamura Y."/>
            <person name="Ohara O."/>
            <person name="Isogai T."/>
            <person name="Sugano S."/>
        </authorList>
    </citation>
    <scope>NUCLEOTIDE SEQUENCE [LARGE SCALE MRNA] OF 3193-3865 AND 4460-4911</scope>
    <source>
        <tissue>Placenta</tissue>
    </source>
</reference>
<reference key="7">
    <citation type="journal article" date="2007" name="BMC Genomics">
        <title>The full-ORF clone resource of the German cDNA consortium.</title>
        <authorList>
            <person name="Bechtel S."/>
            <person name="Rosenfelder H."/>
            <person name="Duda A."/>
            <person name="Schmidt C.P."/>
            <person name="Ernst U."/>
            <person name="Wellenreuther R."/>
            <person name="Mehrle A."/>
            <person name="Schuster C."/>
            <person name="Bahr A."/>
            <person name="Bloecker H."/>
            <person name="Heubner D."/>
            <person name="Hoerlein A."/>
            <person name="Michel G."/>
            <person name="Wedler H."/>
            <person name="Koehrer K."/>
            <person name="Ottenwaelder B."/>
            <person name="Poustka A."/>
            <person name="Wiemann S."/>
            <person name="Schupp I."/>
        </authorList>
    </citation>
    <scope>PARTIAL NUCLEOTIDE SEQUENCE [MRNA] (ISOFORM 3)</scope>
    <source>
        <tissue>Testis</tissue>
    </source>
</reference>
<reference key="8">
    <citation type="journal article" date="2003" name="Mol. Cell. Biol.">
        <title>Activating signal cointegrator 2 belongs to a novel steady-state complex that contains a subset of trithorax group proteins.</title>
        <authorList>
            <person name="Goo Y.-H."/>
            <person name="Sohn Y.C."/>
            <person name="Kim D.-H."/>
            <person name="Kim S.-W."/>
            <person name="Kang M.-J."/>
            <person name="Jung D.-J."/>
            <person name="Kwak E."/>
            <person name="Barlev N.A."/>
            <person name="Berger S.L."/>
            <person name="Chow V.T."/>
            <person name="Roeder R.G."/>
            <person name="Azorsa D.O."/>
            <person name="Meltzer P.S."/>
            <person name="Suh P.-G."/>
            <person name="Song E.J."/>
            <person name="Lee K.-J."/>
            <person name="Lee Y.C."/>
            <person name="Lee J.W."/>
        </authorList>
    </citation>
    <scope>INTERACTION WITH MLL2/3 COMPLEX</scope>
    <source>
        <tissue>Cervix carcinoma</tissue>
    </source>
</reference>
<reference key="9">
    <citation type="journal article" date="2006" name="Proc. Natl. Acad. Sci. U.S.A.">
        <title>Coactivator as a target gene specificity determinant for histone H3 lysine 4 methyltransferases.</title>
        <authorList>
            <person name="Lee S."/>
            <person name="Lee D.K."/>
            <person name="Dou Y."/>
            <person name="Lee J."/>
            <person name="Lee B."/>
            <person name="Kwak E."/>
            <person name="Kong Y.Y."/>
            <person name="Lee S.K."/>
            <person name="Roeder R.G."/>
            <person name="Lee J.W."/>
        </authorList>
    </citation>
    <scope>IDENTIFICATION IN THE MLL2/3 COMPLEX</scope>
</reference>
<reference key="10">
    <citation type="journal article" date="2007" name="J. Biol. Chem.">
        <title>PTIP associates with MLL3- and MLL4-containing histone H3 lysine 4 methyltransferase complex.</title>
        <authorList>
            <person name="Cho Y.-W."/>
            <person name="Hong T."/>
            <person name="Hong S."/>
            <person name="Guo H."/>
            <person name="Yu H."/>
            <person name="Kim D."/>
            <person name="Guszczynski T."/>
            <person name="Dressler G.R."/>
            <person name="Copeland T.D."/>
            <person name="Kalkum M."/>
            <person name="Ge K."/>
        </authorList>
    </citation>
    <scope>FUNCTION</scope>
    <scope>IDENTIFICATION BY MASS SPECTROMETRY</scope>
    <scope>IDENTIFICATION IN THE MLL2/3 COMPLEX</scope>
</reference>
<reference key="11">
    <citation type="journal article" date="2008" name="Proc. Natl. Acad. Sci. U.S.A.">
        <title>A quantitative atlas of mitotic phosphorylation.</title>
        <authorList>
            <person name="Dephoure N."/>
            <person name="Zhou C."/>
            <person name="Villen J."/>
            <person name="Beausoleil S.A."/>
            <person name="Bakalarski C.E."/>
            <person name="Elledge S.J."/>
            <person name="Gygi S.P."/>
        </authorList>
    </citation>
    <scope>IDENTIFICATION BY MASS SPECTROMETRY [LARGE SCALE ANALYSIS]</scope>
    <source>
        <tissue>Cervix carcinoma</tissue>
    </source>
</reference>
<reference key="12">
    <citation type="journal article" date="2009" name="Science">
        <title>Lysine acetylation targets protein complexes and co-regulates major cellular functions.</title>
        <authorList>
            <person name="Choudhary C."/>
            <person name="Kumar C."/>
            <person name="Gnad F."/>
            <person name="Nielsen M.L."/>
            <person name="Rehman M."/>
            <person name="Walther T.C."/>
            <person name="Olsen J.V."/>
            <person name="Mann M."/>
        </authorList>
    </citation>
    <scope>ACETYLATION [LARGE SCALE ANALYSIS] AT LYS-758; LYS-1508; LYS-1772; LYS-2009; LYS-2802; LYS-2809; LYS-2832 AND LYS-3714</scope>
    <scope>IDENTIFICATION BY MASS SPECTROMETRY [LARGE SCALE ANALYSIS]</scope>
</reference>
<reference key="13">
    <citation type="journal article" date="2010" name="Sci. Signal.">
        <title>Quantitative phosphoproteomics reveals widespread full phosphorylation site occupancy during mitosis.</title>
        <authorList>
            <person name="Olsen J.V."/>
            <person name="Vermeulen M."/>
            <person name="Santamaria A."/>
            <person name="Kumar C."/>
            <person name="Miller M.L."/>
            <person name="Jensen L.J."/>
            <person name="Gnad F."/>
            <person name="Cox J."/>
            <person name="Jensen T.S."/>
            <person name="Nigg E.A."/>
            <person name="Brunak S."/>
            <person name="Mann M."/>
        </authorList>
    </citation>
    <scope>PHOSPHORYLATION [LARGE SCALE ANALYSIS] AT SER-46</scope>
    <scope>IDENTIFICATION BY MASS SPECTROMETRY [LARGE SCALE ANALYSIS]</scope>
    <source>
        <tissue>Cervix carcinoma</tissue>
    </source>
</reference>
<reference key="14">
    <citation type="journal article" date="2011" name="Sci. Signal.">
        <title>System-wide temporal characterization of the proteome and phosphoproteome of human embryonic stem cell differentiation.</title>
        <authorList>
            <person name="Rigbolt K.T."/>
            <person name="Prokhorova T.A."/>
            <person name="Akimov V."/>
            <person name="Henningsen J."/>
            <person name="Johansen P.T."/>
            <person name="Kratchmarova I."/>
            <person name="Kassem M."/>
            <person name="Mann M."/>
            <person name="Olsen J.V."/>
            <person name="Blagoev B."/>
        </authorList>
    </citation>
    <scope>PHOSPHORYLATION [LARGE SCALE ANALYSIS] AT SER-89 AND SER-1301</scope>
    <scope>IDENTIFICATION BY MASS SPECTROMETRY [LARGE SCALE ANALYSIS]</scope>
</reference>
<reference key="15">
    <citation type="journal article" date="2012" name="Am. J. Hum. Genet.">
        <title>Disruption of an EHMT1-associated chromatin-modification module causes intellectual disability.</title>
        <authorList>
            <person name="Kleefstra T."/>
            <person name="Kramer J.M."/>
            <person name="Neveling K."/>
            <person name="Willemsen M.H."/>
            <person name="Koemans T.S."/>
            <person name="Vissers L.E."/>
            <person name="Wissink-Lindhout W."/>
            <person name="Fenckova M."/>
            <person name="van den Akker W.M."/>
            <person name="Kasri N.N."/>
            <person name="Nillesen W.M."/>
            <person name="Prescott T."/>
            <person name="Clark R.D."/>
            <person name="Devriendt K."/>
            <person name="van Reeuwijk J."/>
            <person name="de Brouwer A.P."/>
            <person name="Gilissen C."/>
            <person name="Zhou H."/>
            <person name="Brunner H.G."/>
            <person name="Veltman J.A."/>
            <person name="Schenck A."/>
            <person name="van Bokhoven H."/>
        </authorList>
    </citation>
    <scope>INVOLVEMENT IN KLEFS2</scope>
    <scope>VARIANT KLEFS2 1481-ARG--ASN-4911 DEL</scope>
</reference>
<reference key="16">
    <citation type="journal article" date="2013" name="J. Proteome Res.">
        <title>Toward a comprehensive characterization of a human cancer cell phosphoproteome.</title>
        <authorList>
            <person name="Zhou H."/>
            <person name="Di Palma S."/>
            <person name="Preisinger C."/>
            <person name="Peng M."/>
            <person name="Polat A.N."/>
            <person name="Heck A.J."/>
            <person name="Mohammed S."/>
        </authorList>
    </citation>
    <scope>PHOSPHORYLATION [LARGE SCALE ANALYSIS] AT SER-28; SER-113; SER-854; SER-1987; SER-2828 AND SER-4267</scope>
    <scope>IDENTIFICATION BY MASS SPECTROMETRY [LARGE SCALE ANALYSIS]</scope>
    <source>
        <tissue>Erythroleukemia</tissue>
    </source>
</reference>
<reference key="17">
    <citation type="journal article" date="2013" name="Mol. Cell. Biol.">
        <title>Quantitative dissection and stoichiometry determination of the human SET1/MLL histone methyltransferase complexes.</title>
        <authorList>
            <person name="van Nuland R."/>
            <person name="Smits A.H."/>
            <person name="Pallaki P."/>
            <person name="Jansen P.W."/>
            <person name="Vermeulen M."/>
            <person name="Timmers H.T."/>
        </authorList>
    </citation>
    <scope>IDENTIFICATION IN MLL3 COMPLEX</scope>
    <scope>SUBCELLULAR LOCATION</scope>
</reference>
<reference key="18">
    <citation type="journal article" date="2013" name="Mol. Cell. Biol.">
        <title>The MLL3/MLL4 branches of the COMPASS family function as major histone H3K4 monomethylases at enhancers.</title>
        <authorList>
            <person name="Hu D."/>
            <person name="Gao X."/>
            <person name="Morgan M.A."/>
            <person name="Herz H.M."/>
            <person name="Smith E.R."/>
            <person name="Shilatifard A."/>
        </authorList>
    </citation>
    <scope>FUNCTION</scope>
    <scope>CATALYTIC ACTIVITY</scope>
</reference>
<reference key="19">
    <citation type="journal article" date="2014" name="J. Proteomics">
        <title>An enzyme assisted RP-RPLC approach for in-depth analysis of human liver phosphoproteome.</title>
        <authorList>
            <person name="Bian Y."/>
            <person name="Song C."/>
            <person name="Cheng K."/>
            <person name="Dong M."/>
            <person name="Wang F."/>
            <person name="Huang J."/>
            <person name="Sun D."/>
            <person name="Wang L."/>
            <person name="Ye M."/>
            <person name="Zou H."/>
        </authorList>
    </citation>
    <scope>PHOSPHORYLATION [LARGE SCALE ANALYSIS] AT SER-200; SER-3758; SER-4034 AND SER-4267</scope>
    <scope>IDENTIFICATION BY MASS SPECTROMETRY [LARGE SCALE ANALYSIS]</scope>
    <source>
        <tissue>Liver</tissue>
    </source>
</reference>
<reference key="20">
    <citation type="journal article" date="2015" name="J. Biol. Chem.">
        <title>Biochemical reconstitution and phylogenetic comparison of human SET1 family core complexes involved in histone methylation.</title>
        <authorList>
            <person name="Shinsky S.A."/>
            <person name="Monteith K.E."/>
            <person name="Viggiano S."/>
            <person name="Cosgrove M.S."/>
        </authorList>
    </citation>
    <scope>FUNCTION</scope>
    <scope>CATALYTIC ACTIVITY</scope>
    <scope>SUBUNIT</scope>
    <scope>MUTAGENESIS OF ARG-4779; TYR-4786; ASN-4848; GLN-4877 AND HIS-4900</scope>
</reference>
<reference key="21">
    <citation type="journal article" date="2017" name="PLoS Genet.">
        <title>Functional convergence of histone methyltransferases EHMT1 and KMT2C involved in intellectual disability and autism spectrum disorder.</title>
        <authorList>
            <person name="Koemans T.S."/>
            <person name="Kleefstra T."/>
            <person name="Chubak M.C."/>
            <person name="Stone M.H."/>
            <person name="Reijnders M.R.F."/>
            <person name="de Munnik S."/>
            <person name="Willemsen M.H."/>
            <person name="Fenckova M."/>
            <person name="Stumpel C.T.R.M."/>
            <person name="Bok L.A."/>
            <person name="Sifuentes Saenz M."/>
            <person name="Byerly K.A."/>
            <person name="Baughn L.B."/>
            <person name="Stegmann A.P.A."/>
            <person name="Pfundt R."/>
            <person name="Zhou H."/>
            <person name="van Bokhoven H."/>
            <person name="Schenck A."/>
            <person name="Kramer J.M."/>
        </authorList>
    </citation>
    <scope>INVOLVEMENT IN KLEFS2</scope>
    <scope>VARIANTS KLEFS2 564-LYS--ASN-4911 DEL AND 2517-SER--ASN-4911 DEL</scope>
</reference>
<reference key="22">
    <citation type="submission" date="2007-10" db="PDB data bank">
        <title>Solution structure of the first and second PHD domain from myeloid/lymphoid or mixed-lineage leukemia protein 3 homolog.</title>
        <authorList>
            <consortium name="RIKEN structural genomics initiative (RSGI)"/>
        </authorList>
    </citation>
    <scope>STRUCTURE BY NMR OF 342-439</scope>
</reference>
<reference key="23">
    <citation type="submission" date="2008-04" db="PDB data bank">
        <title>Solution structure of the HMG box of human myeloid/lymphoid or mixed-lineage leukemia protein 3 homolog.</title>
        <authorList>
            <consortium name="RIKEN structural genomics initiative (RSGI)"/>
        </authorList>
    </citation>
    <scope>STRUCTURE BY NMR OF 1624-1713</scope>
</reference>
<reference evidence="29" key="24">
    <citation type="journal article" date="2012" name="J. Biol. Chem.">
        <title>Structural basis for WDR5 interaction (Win) motif recognition in human SET1 family histone methyltransferases.</title>
        <authorList>
            <person name="Dharmarajan V."/>
            <person name="Lee J.H."/>
            <person name="Patel A."/>
            <person name="Skalnik D.G."/>
            <person name="Cosgrove M.S."/>
        </authorList>
    </citation>
    <scope>X-RAY CRYSTALLOGRAPHY (1.30 ANGSTROMS) OF 4703-4716 IN COMPLEX WITH WDR5</scope>
    <scope>INTERACTION WITH WDR5</scope>
    <scope>MOTIF WIN</scope>
</reference>
<reference evidence="28" key="25">
    <citation type="journal article" date="2012" name="Nucleic Acids Res.">
        <title>The plasticity of WDR5 peptide-binding cleft enables the binding of the SET1 family of histone methyltransferases.</title>
        <authorList>
            <person name="Zhang P."/>
            <person name="Lee H."/>
            <person name="Brunzelle J.S."/>
            <person name="Couture J.F."/>
        </authorList>
    </citation>
    <scope>X-RAY CRYSTALLOGRAPHY (2.20 ANGSTROMS) OF 4707-4717 IN COMPLEX WITH WDR5</scope>
    <scope>INTERACTION WITH WDR5</scope>
    <scope>MOTIF WIN</scope>
    <scope>FUNCTION</scope>
</reference>
<reference key="26">
    <citation type="journal article" date="2006" name="Science">
        <title>The consensus coding sequences of human breast and colorectal cancers.</title>
        <authorList>
            <person name="Sjoeblom T."/>
            <person name="Jones S."/>
            <person name="Wood L.D."/>
            <person name="Parsons D.W."/>
            <person name="Lin J."/>
            <person name="Barber T.D."/>
            <person name="Mandelker D."/>
            <person name="Leary R.J."/>
            <person name="Ptak J."/>
            <person name="Silliman N."/>
            <person name="Szabo S."/>
            <person name="Buckhaults P."/>
            <person name="Farrell C."/>
            <person name="Meeh P."/>
            <person name="Markowitz S.D."/>
            <person name="Willis J."/>
            <person name="Dawson D."/>
            <person name="Willson J.K.V."/>
            <person name="Gazdar A.F."/>
            <person name="Hartigan J."/>
            <person name="Wu L."/>
            <person name="Liu C."/>
            <person name="Parmigiani G."/>
            <person name="Park B.H."/>
            <person name="Bachman K.E."/>
            <person name="Papadopoulos N."/>
            <person name="Vogelstein B."/>
            <person name="Kinzler K.W."/>
            <person name="Velculescu V.E."/>
        </authorList>
    </citation>
    <scope>VARIANTS [LARGE SCALE ANALYSIS] GLY-347; ASN-400; TRP-478 AND SER-3698</scope>
</reference>
<evidence type="ECO:0000250" key="1"/>
<evidence type="ECO:0000250" key="2">
    <source>
        <dbReference type="UniProtKB" id="Q8BRH4"/>
    </source>
</evidence>
<evidence type="ECO:0000255" key="3"/>
<evidence type="ECO:0000255" key="4">
    <source>
        <dbReference type="PROSITE-ProRule" id="PRU00067"/>
    </source>
</evidence>
<evidence type="ECO:0000255" key="5">
    <source>
        <dbReference type="PROSITE-ProRule" id="PRU00146"/>
    </source>
</evidence>
<evidence type="ECO:0000255" key="6">
    <source>
        <dbReference type="PROSITE-ProRule" id="PRU00155"/>
    </source>
</evidence>
<evidence type="ECO:0000255" key="7">
    <source>
        <dbReference type="PROSITE-ProRule" id="PRU00175"/>
    </source>
</evidence>
<evidence type="ECO:0000255" key="8">
    <source>
        <dbReference type="PROSITE-ProRule" id="PRU00190"/>
    </source>
</evidence>
<evidence type="ECO:0000255" key="9">
    <source>
        <dbReference type="PROSITE-ProRule" id="PRU00875"/>
    </source>
</evidence>
<evidence type="ECO:0000255" key="10">
    <source>
        <dbReference type="PROSITE-ProRule" id="PRU00876"/>
    </source>
</evidence>
<evidence type="ECO:0000255" key="11">
    <source>
        <dbReference type="PROSITE-ProRule" id="PRU01146"/>
    </source>
</evidence>
<evidence type="ECO:0000256" key="12">
    <source>
        <dbReference type="SAM" id="MobiDB-lite"/>
    </source>
</evidence>
<evidence type="ECO:0000269" key="13">
    <source>
    </source>
</evidence>
<evidence type="ECO:0000269" key="14">
    <source>
    </source>
</evidence>
<evidence type="ECO:0000269" key="15">
    <source>
    </source>
</evidence>
<evidence type="ECO:0000269" key="16">
    <source>
    </source>
</evidence>
<evidence type="ECO:0000269" key="17">
    <source>
    </source>
</evidence>
<evidence type="ECO:0000269" key="18">
    <source>
    </source>
</evidence>
<evidence type="ECO:0000269" key="19">
    <source>
    </source>
</evidence>
<evidence type="ECO:0000269" key="20">
    <source>
    </source>
</evidence>
<evidence type="ECO:0000269" key="21">
    <source>
    </source>
</evidence>
<evidence type="ECO:0000269" key="22">
    <source>
    </source>
</evidence>
<evidence type="ECO:0000269" key="23">
    <source>
    </source>
</evidence>
<evidence type="ECO:0000303" key="24">
    <source>
    </source>
</evidence>
<evidence type="ECO:0000305" key="25"/>
<evidence type="ECO:0000305" key="26">
    <source>
    </source>
</evidence>
<evidence type="ECO:0000305" key="27">
    <source>
    </source>
</evidence>
<evidence type="ECO:0007744" key="28">
    <source>
        <dbReference type="PDB" id="3UVL"/>
    </source>
</evidence>
<evidence type="ECO:0007744" key="29">
    <source>
        <dbReference type="PDB" id="4ERY"/>
    </source>
</evidence>
<evidence type="ECO:0007744" key="30">
    <source>
    </source>
</evidence>
<evidence type="ECO:0007744" key="31">
    <source>
    </source>
</evidence>
<evidence type="ECO:0007744" key="32">
    <source>
    </source>
</evidence>
<evidence type="ECO:0007744" key="33">
    <source>
    </source>
</evidence>
<evidence type="ECO:0007744" key="34">
    <source>
    </source>
</evidence>
<evidence type="ECO:0007829" key="35">
    <source>
        <dbReference type="PDB" id="2YSM"/>
    </source>
</evidence>
<evidence type="ECO:0007829" key="36">
    <source>
        <dbReference type="PDB" id="2YUK"/>
    </source>
</evidence>
<evidence type="ECO:0007829" key="37">
    <source>
        <dbReference type="PDB" id="4ERY"/>
    </source>
</evidence>
<evidence type="ECO:0007829" key="38">
    <source>
        <dbReference type="PDB" id="5F59"/>
    </source>
</evidence>
<evidence type="ECO:0007829" key="39">
    <source>
        <dbReference type="PDB" id="6MLC"/>
    </source>
</evidence>
<evidence type="ECO:0007829" key="40">
    <source>
        <dbReference type="PDB" id="7W6L"/>
    </source>
</evidence>